<accession>Q07157</accession>
<accession>B4E3K1</accession>
<accession>Q2NKP3</accession>
<accession>Q4ZGJ6</accession>
<feature type="chain" id="PRO_0000094540" description="Tight junction protein 1">
    <location>
        <begin position="1"/>
        <end position="1748"/>
    </location>
</feature>
<feature type="domain" description="PDZ 1" evidence="5">
    <location>
        <begin position="23"/>
        <end position="110"/>
    </location>
</feature>
<feature type="domain" description="PDZ 2" evidence="5">
    <location>
        <begin position="186"/>
        <end position="264"/>
    </location>
</feature>
<feature type="domain" description="PDZ 3" evidence="5">
    <location>
        <begin position="421"/>
        <end position="502"/>
    </location>
</feature>
<feature type="domain" description="SH3" evidence="6">
    <location>
        <begin position="516"/>
        <end position="584"/>
    </location>
</feature>
<feature type="domain" description="Guanylate kinase-like" evidence="4">
    <location>
        <begin position="598"/>
        <end position="779"/>
    </location>
</feature>
<feature type="domain" description="ZU5" evidence="7">
    <location>
        <begin position="1634"/>
        <end position="1748"/>
    </location>
</feature>
<feature type="region of interest" description="Disordered" evidence="8">
    <location>
        <begin position="102"/>
        <end position="189"/>
    </location>
</feature>
<feature type="region of interest" description="Disordered" evidence="8">
    <location>
        <begin position="295"/>
        <end position="396"/>
    </location>
</feature>
<feature type="region of interest" description="Occludin (OCLN)-binding region" evidence="32">
    <location>
        <begin position="633"/>
        <end position="876"/>
    </location>
</feature>
<feature type="region of interest" description="Disordered" evidence="8">
    <location>
        <begin position="825"/>
        <end position="1081"/>
    </location>
</feature>
<feature type="region of interest" description="Disordered" evidence="8">
    <location>
        <begin position="1095"/>
        <end position="1587"/>
    </location>
</feature>
<feature type="region of interest" description="Actin-binding region (ABR)" evidence="12">
    <location>
        <begin position="1151"/>
        <end position="1371"/>
    </location>
</feature>
<feature type="compositionally biased region" description="Basic residues" evidence="8">
    <location>
        <begin position="102"/>
        <end position="112"/>
    </location>
</feature>
<feature type="compositionally biased region" description="Acidic residues" evidence="8">
    <location>
        <begin position="123"/>
        <end position="136"/>
    </location>
</feature>
<feature type="compositionally biased region" description="Basic and acidic residues" evidence="8">
    <location>
        <begin position="149"/>
        <end position="175"/>
    </location>
</feature>
<feature type="compositionally biased region" description="Basic and acidic residues" evidence="8">
    <location>
        <begin position="299"/>
        <end position="327"/>
    </location>
</feature>
<feature type="compositionally biased region" description="Polar residues" evidence="8">
    <location>
        <begin position="329"/>
        <end position="338"/>
    </location>
</feature>
<feature type="compositionally biased region" description="Basic and acidic residues" evidence="8">
    <location>
        <begin position="357"/>
        <end position="377"/>
    </location>
</feature>
<feature type="compositionally biased region" description="Basic and acidic residues" evidence="8">
    <location>
        <begin position="879"/>
        <end position="892"/>
    </location>
</feature>
<feature type="compositionally biased region" description="Low complexity" evidence="8">
    <location>
        <begin position="893"/>
        <end position="906"/>
    </location>
</feature>
<feature type="compositionally biased region" description="Polar residues" evidence="8">
    <location>
        <begin position="934"/>
        <end position="953"/>
    </location>
</feature>
<feature type="compositionally biased region" description="Polar residues" evidence="8">
    <location>
        <begin position="963"/>
        <end position="979"/>
    </location>
</feature>
<feature type="compositionally biased region" description="Basic and acidic residues" evidence="8">
    <location>
        <begin position="998"/>
        <end position="1014"/>
    </location>
</feature>
<feature type="compositionally biased region" description="Polar residues" evidence="8">
    <location>
        <begin position="1061"/>
        <end position="1072"/>
    </location>
</feature>
<feature type="compositionally biased region" description="Basic and acidic residues" evidence="8">
    <location>
        <begin position="1110"/>
        <end position="1125"/>
    </location>
</feature>
<feature type="compositionally biased region" description="Basic and acidic residues" evidence="8">
    <location>
        <begin position="1269"/>
        <end position="1286"/>
    </location>
</feature>
<feature type="compositionally biased region" description="Basic and acidic residues" evidence="8">
    <location>
        <begin position="1336"/>
        <end position="1347"/>
    </location>
</feature>
<feature type="compositionally biased region" description="Low complexity" evidence="8">
    <location>
        <begin position="1389"/>
        <end position="1400"/>
    </location>
</feature>
<feature type="compositionally biased region" description="Basic and acidic residues" evidence="8">
    <location>
        <begin position="1403"/>
        <end position="1420"/>
    </location>
</feature>
<feature type="compositionally biased region" description="Polar residues" evidence="8">
    <location>
        <begin position="1459"/>
        <end position="1470"/>
    </location>
</feature>
<feature type="compositionally biased region" description="Polar residues" evidence="8">
    <location>
        <begin position="1512"/>
        <end position="1522"/>
    </location>
</feature>
<feature type="compositionally biased region" description="Basic and acidic residues" evidence="8">
    <location>
        <begin position="1538"/>
        <end position="1547"/>
    </location>
</feature>
<feature type="modified residue" description="Phosphoserine" evidence="38 39 41 42 43">
    <location>
        <position position="125"/>
    </location>
</feature>
<feature type="modified residue" description="Phosphotyrosine" evidence="1">
    <location>
        <position position="132"/>
    </location>
</feature>
<feature type="modified residue" description="Phosphoserine" evidence="41 43">
    <location>
        <position position="175"/>
    </location>
</feature>
<feature type="modified residue" description="Phosphoserine" evidence="41">
    <location>
        <position position="178"/>
    </location>
</feature>
<feature type="modified residue" description="Phosphoserine" evidence="41 43">
    <location>
        <position position="179"/>
    </location>
</feature>
<feature type="modified residue" description="Phosphothreonine" evidence="41">
    <location>
        <position position="185"/>
    </location>
</feature>
<feature type="modified residue" description="Phosphoserine" evidence="42">
    <location>
        <position position="212"/>
    </location>
</feature>
<feature type="modified residue" description="Phosphoserine" evidence="3">
    <location>
        <position position="241"/>
    </location>
</feature>
<feature type="modified residue" description="Phosphothreonine" evidence="43">
    <location>
        <position position="267"/>
    </location>
</feature>
<feature type="modified residue" description="Phosphoserine" evidence="43">
    <location>
        <position position="275"/>
    </location>
</feature>
<feature type="modified residue" description="Phosphoserine" evidence="39 43">
    <location>
        <position position="277"/>
    </location>
</feature>
<feature type="modified residue" description="Phosphoserine" evidence="43">
    <location>
        <position position="280"/>
    </location>
</feature>
<feature type="modified residue" description="Phosphoserine" evidence="43">
    <location>
        <position position="284"/>
    </location>
</feature>
<feature type="modified residue" description="Phosphoserine" evidence="43">
    <location>
        <position position="290"/>
    </location>
</feature>
<feature type="modified residue" description="Phosphoserine" evidence="43">
    <location>
        <position position="294"/>
    </location>
</feature>
<feature type="modified residue" description="Phosphoserine" evidence="41 43">
    <location>
        <position position="297"/>
    </location>
</feature>
<feature type="modified residue" description="Phosphoserine" evidence="41 43">
    <location>
        <position position="300"/>
    </location>
</feature>
<feature type="modified residue" description="Phosphoserine" evidence="3">
    <location>
        <position position="323"/>
    </location>
</feature>
<feature type="modified residue" description="Phosphoserine" evidence="39 40 41 42">
    <location>
        <position position="329"/>
    </location>
</feature>
<feature type="modified residue" description="Phosphoserine" evidence="41">
    <location>
        <position position="334"/>
    </location>
</feature>
<feature type="modified residue" description="Phosphoserine" evidence="37 40 41">
    <location>
        <position position="337"/>
    </location>
</feature>
<feature type="modified residue" description="Phosphoserine" evidence="40">
    <location>
        <position position="353"/>
    </location>
</feature>
<feature type="modified residue" description="Phosphothreonine" evidence="42">
    <location>
        <position position="354"/>
    </location>
</feature>
<feature type="modified residue" description="Phosphoserine" evidence="39 40 41 42 43">
    <location>
        <position position="617"/>
    </location>
</feature>
<feature type="modified residue" description="Phosphoserine" evidence="41">
    <location>
        <position position="622"/>
    </location>
</feature>
<feature type="modified residue" description="Phosphothreonine" evidence="43">
    <location>
        <position position="809"/>
    </location>
</feature>
<feature type="modified residue" description="Phosphoserine" evidence="3">
    <location>
        <position position="810"/>
    </location>
</feature>
<feature type="modified residue" description="Phosphoserine" evidence="43">
    <location>
        <position position="821"/>
    </location>
</feature>
<feature type="modified residue" description="Phosphotyrosine" evidence="3">
    <location>
        <position position="822"/>
    </location>
</feature>
<feature type="modified residue" description="Phosphoserine" evidence="3">
    <location>
        <position position="824"/>
    </location>
</feature>
<feature type="modified residue" description="Phosphoserine" evidence="1">
    <location>
        <position position="828"/>
    </location>
</feature>
<feature type="modified residue" description="Phosphoserine" evidence="42">
    <location>
        <position position="837"/>
    </location>
</feature>
<feature type="modified residue" description="Phosphothreonine" evidence="1">
    <location>
        <position position="846"/>
    </location>
</feature>
<feature type="modified residue" description="Phosphothreonine" evidence="3">
    <location>
        <position position="848"/>
    </location>
</feature>
<feature type="modified residue" description="Phosphothreonine" evidence="43">
    <location>
        <position position="854"/>
    </location>
</feature>
<feature type="modified residue" description="Phosphothreonine" evidence="43">
    <location>
        <position position="861"/>
    </location>
</feature>
<feature type="modified residue" description="Phosphothreonine" evidence="43">
    <location>
        <position position="868"/>
    </location>
</feature>
<feature type="modified residue" description="Phosphoserine" evidence="38 39 42 43">
    <location>
        <position position="912"/>
    </location>
</feature>
<feature type="modified residue" description="Phosphoserine" evidence="39 40 42 43">
    <location>
        <position position="968"/>
    </location>
</feature>
<feature type="modified residue" description="Phosphoserine" evidence="3">
    <location>
        <position position="1071"/>
    </location>
</feature>
<feature type="modified residue" description="Phosphoserine" evidence="42">
    <location>
        <position position="1111"/>
    </location>
</feature>
<feature type="modified residue" description="Phosphoserine" evidence="3">
    <location>
        <position position="1139"/>
    </location>
</feature>
<feature type="modified residue" description="Phosphotyrosine" evidence="3">
    <location>
        <position position="1140"/>
    </location>
</feature>
<feature type="modified residue" description="Phosphotyrosine" evidence="3">
    <location>
        <position position="1165"/>
    </location>
</feature>
<feature type="modified residue" description="Phosphotyrosine" evidence="3">
    <location>
        <position position="1354"/>
    </location>
</feature>
<feature type="modified residue" description="Phosphoserine" evidence="37 40 41">
    <location>
        <position position="1366"/>
    </location>
</feature>
<feature type="modified residue" description="Phosphoserine" evidence="42">
    <location>
        <position position="1413"/>
    </location>
</feature>
<feature type="modified residue" description="Phosphoserine" evidence="39">
    <location>
        <position position="1545"/>
    </location>
</feature>
<feature type="modified residue" description="Phosphoserine" evidence="40 42 43">
    <location>
        <position position="1617"/>
    </location>
</feature>
<feature type="splice variant" id="VSP_003148" description="In isoform Short." evidence="35">
    <location>
        <begin position="922"/>
        <end position="1001"/>
    </location>
</feature>
<feature type="sequence variant" id="VAR_025153" description="In dbSNP:rs2229517." evidence="33">
    <original>N</original>
    <variation>S</variation>
    <location>
        <position position="471"/>
    </location>
</feature>
<feature type="sequence variant" id="VAR_025154" description="In dbSNP:rs2229515." evidence="13 31 33">
    <original>I</original>
    <variation>V</variation>
    <location>
        <position position="790"/>
    </location>
</feature>
<feature type="sequence variant" id="VAR_025155" description="In dbSNP:rs45529137." evidence="33">
    <original>P</original>
    <variation>L</variation>
    <location>
        <position position="930"/>
    </location>
</feature>
<feature type="sequence variant" id="VAR_025156" description="In dbSNP:rs45567033." evidence="33">
    <original>H</original>
    <variation>R</variation>
    <location>
        <position position="1110"/>
    </location>
</feature>
<feature type="sequence variant" id="VAR_025157" description="In dbSNP:rs2291166." evidence="33">
    <original>D</original>
    <variation>A</variation>
    <location>
        <position position="1347"/>
    </location>
</feature>
<feature type="sequence variant" id="VAR_025158" description="In dbSNP:rs45578638." evidence="33">
    <original>N</original>
    <variation>S</variation>
    <location>
        <position position="1605"/>
    </location>
</feature>
<feature type="mutagenesis site" description="Strongly reduced interaction with GJA1." evidence="19">
    <original>R</original>
    <variation>A</variation>
    <location>
        <position position="201"/>
    </location>
</feature>
<feature type="mutagenesis site" description="Abolishes interaction with GJA1." evidence="19">
    <original>K</original>
    <variation>A</variation>
    <location>
        <position position="209"/>
    </location>
</feature>
<feature type="mutagenesis site" description="Abolishes interaction with CDC42BPB." evidence="25">
    <original>MC</original>
    <variation>AA</variation>
    <location>
        <begin position="1699"/>
        <end position="1700"/>
    </location>
</feature>
<feature type="mutagenesis site" description="Abolishes interaction with CDC42BPB and MYZAP." evidence="25">
    <location>
        <position position="1748"/>
    </location>
</feature>
<feature type="sequence conflict" description="In Ref. 1; AAA02891." evidence="35" ref="1">
    <original>QPDVDLPVSPSDGVLPNSTHEDGI</original>
    <variation>NQMWIYLSVHLMVSYLIQLMKMGF</variation>
    <location>
        <begin position="394"/>
        <end position="417"/>
    </location>
</feature>
<feature type="sequence conflict" description="In Ref. 1; AAA02891." evidence="35" ref="1">
    <original>V</original>
    <variation>A</variation>
    <location>
        <position position="545"/>
    </location>
</feature>
<feature type="sequence conflict" description="In Ref. 1; AAA02891." evidence="35" ref="1">
    <original>I</original>
    <variation>Y</variation>
    <location>
        <position position="688"/>
    </location>
</feature>
<feature type="sequence conflict" description="In Ref. 1; AAA02891." evidence="35" ref="1">
    <original>R</original>
    <variation>A</variation>
    <location>
        <position position="762"/>
    </location>
</feature>
<feature type="strand" evidence="44">
    <location>
        <begin position="19"/>
        <end position="27"/>
    </location>
</feature>
<feature type="turn" evidence="44">
    <location>
        <begin position="30"/>
        <end position="32"/>
    </location>
</feature>
<feature type="strand" evidence="44">
    <location>
        <begin position="36"/>
        <end position="40"/>
    </location>
</feature>
<feature type="turn" evidence="44">
    <location>
        <begin position="47"/>
        <end position="49"/>
    </location>
</feature>
<feature type="strand" evidence="44">
    <location>
        <begin position="54"/>
        <end position="59"/>
    </location>
</feature>
<feature type="turn" evidence="54">
    <location>
        <begin position="64"/>
        <end position="68"/>
    </location>
</feature>
<feature type="strand" evidence="44">
    <location>
        <begin position="74"/>
        <end position="78"/>
    </location>
</feature>
<feature type="helix" evidence="44">
    <location>
        <begin position="88"/>
        <end position="96"/>
    </location>
</feature>
<feature type="strand" evidence="44">
    <location>
        <begin position="100"/>
        <end position="110"/>
    </location>
</feature>
<feature type="strand" evidence="48">
    <location>
        <begin position="186"/>
        <end position="190"/>
    </location>
</feature>
<feature type="turn" evidence="45">
    <location>
        <begin position="191"/>
        <end position="193"/>
    </location>
</feature>
<feature type="strand" evidence="45">
    <location>
        <begin position="194"/>
        <end position="196"/>
    </location>
</feature>
<feature type="strand" evidence="48">
    <location>
        <begin position="200"/>
        <end position="211"/>
    </location>
</feature>
<feature type="helix" evidence="48">
    <location>
        <begin position="216"/>
        <end position="220"/>
    </location>
</feature>
<feature type="strand" evidence="48">
    <location>
        <begin position="228"/>
        <end position="232"/>
    </location>
</feature>
<feature type="helix" evidence="48">
    <location>
        <begin position="242"/>
        <end position="250"/>
    </location>
</feature>
<feature type="turn" evidence="49">
    <location>
        <begin position="251"/>
        <end position="254"/>
    </location>
</feature>
<feature type="strand" evidence="48">
    <location>
        <begin position="255"/>
        <end position="261"/>
    </location>
</feature>
<feature type="strand" evidence="53">
    <location>
        <begin position="422"/>
        <end position="428"/>
    </location>
</feature>
<feature type="strand" evidence="53">
    <location>
        <begin position="435"/>
        <end position="439"/>
    </location>
</feature>
<feature type="strand" evidence="53">
    <location>
        <begin position="441"/>
        <end position="443"/>
    </location>
</feature>
<feature type="strand" evidence="53">
    <location>
        <begin position="445"/>
        <end position="450"/>
    </location>
</feature>
<feature type="strand" evidence="50">
    <location>
        <begin position="452"/>
        <end position="454"/>
    </location>
</feature>
<feature type="helix" evidence="53">
    <location>
        <begin position="455"/>
        <end position="458"/>
    </location>
</feature>
<feature type="strand" evidence="53">
    <location>
        <begin position="466"/>
        <end position="470"/>
    </location>
</feature>
<feature type="helix" evidence="53">
    <location>
        <begin position="480"/>
        <end position="489"/>
    </location>
</feature>
<feature type="strand" evidence="53">
    <location>
        <begin position="495"/>
        <end position="501"/>
    </location>
</feature>
<feature type="helix" evidence="51">
    <location>
        <begin position="504"/>
        <end position="510"/>
    </location>
</feature>
<feature type="strand" evidence="52">
    <location>
        <begin position="519"/>
        <end position="523"/>
    </location>
</feature>
<feature type="strand" evidence="52">
    <location>
        <begin position="542"/>
        <end position="549"/>
    </location>
</feature>
<feature type="helix" evidence="52">
    <location>
        <begin position="550"/>
        <end position="552"/>
    </location>
</feature>
<feature type="strand" evidence="52">
    <location>
        <begin position="553"/>
        <end position="562"/>
    </location>
</feature>
<feature type="helix" evidence="52">
    <location>
        <begin position="564"/>
        <end position="566"/>
    </location>
</feature>
<feature type="strand" evidence="52">
    <location>
        <begin position="568"/>
        <end position="575"/>
    </location>
</feature>
<feature type="helix" evidence="52">
    <location>
        <begin position="577"/>
        <end position="584"/>
    </location>
</feature>
<feature type="strand" evidence="52">
    <location>
        <begin position="632"/>
        <end position="640"/>
    </location>
</feature>
<feature type="strand" evidence="52">
    <location>
        <begin position="647"/>
        <end position="651"/>
    </location>
</feature>
<feature type="helix" evidence="52">
    <location>
        <begin position="654"/>
        <end position="664"/>
    </location>
</feature>
<feature type="turn" evidence="52">
    <location>
        <begin position="666"/>
        <end position="668"/>
    </location>
</feature>
<feature type="strand" evidence="52">
    <location>
        <begin position="669"/>
        <end position="671"/>
    </location>
</feature>
<feature type="strand" evidence="52">
    <location>
        <begin position="679"/>
        <end position="681"/>
    </location>
</feature>
<feature type="helix" evidence="52">
    <location>
        <begin position="691"/>
        <end position="698"/>
    </location>
</feature>
<feature type="turn" evidence="52">
    <location>
        <begin position="699"/>
        <end position="701"/>
    </location>
</feature>
<feature type="strand" evidence="52">
    <location>
        <begin position="703"/>
        <end position="706"/>
    </location>
</feature>
<feature type="helix" evidence="52">
    <location>
        <begin position="710"/>
        <end position="718"/>
    </location>
</feature>
<feature type="strand" evidence="52">
    <location>
        <begin position="724"/>
        <end position="729"/>
    </location>
</feature>
<feature type="helix" evidence="52">
    <location>
        <begin position="733"/>
        <end position="743"/>
    </location>
</feature>
<feature type="helix" evidence="52">
    <location>
        <begin position="751"/>
        <end position="765"/>
    </location>
</feature>
<feature type="helix" evidence="52">
    <location>
        <begin position="766"/>
        <end position="768"/>
    </location>
</feature>
<feature type="strand" evidence="52">
    <location>
        <begin position="770"/>
        <end position="774"/>
    </location>
</feature>
<feature type="helix" evidence="52">
    <location>
        <begin position="781"/>
        <end position="795"/>
    </location>
</feature>
<feature type="strand" evidence="52">
    <location>
        <begin position="796"/>
        <end position="801"/>
    </location>
</feature>
<feature type="strand" evidence="46">
    <location>
        <begin position="1633"/>
        <end position="1640"/>
    </location>
</feature>
<feature type="strand" evidence="46">
    <location>
        <begin position="1645"/>
        <end position="1648"/>
    </location>
</feature>
<feature type="turn" evidence="46">
    <location>
        <begin position="1650"/>
        <end position="1652"/>
    </location>
</feature>
<feature type="strand" evidence="46">
    <location>
        <begin position="1655"/>
        <end position="1658"/>
    </location>
</feature>
<feature type="strand" evidence="46">
    <location>
        <begin position="1669"/>
        <end position="1677"/>
    </location>
</feature>
<feature type="strand" evidence="46">
    <location>
        <begin position="1679"/>
        <end position="1681"/>
    </location>
</feature>
<feature type="turn" evidence="46">
    <location>
        <begin position="1687"/>
        <end position="1689"/>
    </location>
</feature>
<feature type="strand" evidence="46">
    <location>
        <begin position="1701"/>
        <end position="1703"/>
    </location>
</feature>
<feature type="strand" evidence="46">
    <location>
        <begin position="1706"/>
        <end position="1715"/>
    </location>
</feature>
<feature type="helix" evidence="47">
    <location>
        <begin position="1720"/>
        <end position="1723"/>
    </location>
</feature>
<feature type="helix" evidence="46">
    <location>
        <begin position="1732"/>
        <end position="1734"/>
    </location>
</feature>
<feature type="turn" evidence="46">
    <location>
        <begin position="1735"/>
        <end position="1737"/>
    </location>
</feature>
<feature type="strand" evidence="46">
    <location>
        <begin position="1738"/>
        <end position="1747"/>
    </location>
</feature>
<feature type="modified residue" description="Phosphoserine" evidence="39 40 41 43">
    <location sequence="Q07157-2">
        <position position="912"/>
    </location>
</feature>
<reference key="1">
    <citation type="journal article" date="1993" name="Proc. Natl. Acad. Sci. U.S.A.">
        <title>The tight junction protein ZO-1 is homologous to the Drosophila discs-large tumor suppressor protein of septate junctions.</title>
        <authorList>
            <person name="Willott E."/>
            <person name="Balda M.S."/>
            <person name="Fanning A.S."/>
            <person name="Jameson B."/>
            <person name="van Itallie C."/>
            <person name="Anderson J.M."/>
        </authorList>
    </citation>
    <scope>NUCLEOTIDE SEQUENCE [MRNA]</scope>
    <scope>VARIANT VAL-790</scope>
    <source>
        <tissue>Liver</tissue>
    </source>
</reference>
<reference key="2">
    <citation type="journal article" date="2004" name="Nat. Genet.">
        <title>Complete sequencing and characterization of 21,243 full-length human cDNAs.</title>
        <authorList>
            <person name="Ota T."/>
            <person name="Suzuki Y."/>
            <person name="Nishikawa T."/>
            <person name="Otsuki T."/>
            <person name="Sugiyama T."/>
            <person name="Irie R."/>
            <person name="Wakamatsu A."/>
            <person name="Hayashi K."/>
            <person name="Sato H."/>
            <person name="Nagai K."/>
            <person name="Kimura K."/>
            <person name="Makita H."/>
            <person name="Sekine M."/>
            <person name="Obayashi M."/>
            <person name="Nishi T."/>
            <person name="Shibahara T."/>
            <person name="Tanaka T."/>
            <person name="Ishii S."/>
            <person name="Yamamoto J."/>
            <person name="Saito K."/>
            <person name="Kawai Y."/>
            <person name="Isono Y."/>
            <person name="Nakamura Y."/>
            <person name="Nagahari K."/>
            <person name="Murakami K."/>
            <person name="Yasuda T."/>
            <person name="Iwayanagi T."/>
            <person name="Wagatsuma M."/>
            <person name="Shiratori A."/>
            <person name="Sudo H."/>
            <person name="Hosoiri T."/>
            <person name="Kaku Y."/>
            <person name="Kodaira H."/>
            <person name="Kondo H."/>
            <person name="Sugawara M."/>
            <person name="Takahashi M."/>
            <person name="Kanda K."/>
            <person name="Yokoi T."/>
            <person name="Furuya T."/>
            <person name="Kikkawa E."/>
            <person name="Omura Y."/>
            <person name="Abe K."/>
            <person name="Kamihara K."/>
            <person name="Katsuta N."/>
            <person name="Sato K."/>
            <person name="Tanikawa M."/>
            <person name="Yamazaki M."/>
            <person name="Ninomiya K."/>
            <person name="Ishibashi T."/>
            <person name="Yamashita H."/>
            <person name="Murakawa K."/>
            <person name="Fujimori K."/>
            <person name="Tanai H."/>
            <person name="Kimata M."/>
            <person name="Watanabe M."/>
            <person name="Hiraoka S."/>
            <person name="Chiba Y."/>
            <person name="Ishida S."/>
            <person name="Ono Y."/>
            <person name="Takiguchi S."/>
            <person name="Watanabe S."/>
            <person name="Yosida M."/>
            <person name="Hotuta T."/>
            <person name="Kusano J."/>
            <person name="Kanehori K."/>
            <person name="Takahashi-Fujii A."/>
            <person name="Hara H."/>
            <person name="Tanase T.-O."/>
            <person name="Nomura Y."/>
            <person name="Togiya S."/>
            <person name="Komai F."/>
            <person name="Hara R."/>
            <person name="Takeuchi K."/>
            <person name="Arita M."/>
            <person name="Imose N."/>
            <person name="Musashino K."/>
            <person name="Yuuki H."/>
            <person name="Oshima A."/>
            <person name="Sasaki N."/>
            <person name="Aotsuka S."/>
            <person name="Yoshikawa Y."/>
            <person name="Matsunawa H."/>
            <person name="Ichihara T."/>
            <person name="Shiohata N."/>
            <person name="Sano S."/>
            <person name="Moriya S."/>
            <person name="Momiyama H."/>
            <person name="Satoh N."/>
            <person name="Takami S."/>
            <person name="Terashima Y."/>
            <person name="Suzuki O."/>
            <person name="Nakagawa S."/>
            <person name="Senoh A."/>
            <person name="Mizoguchi H."/>
            <person name="Goto Y."/>
            <person name="Shimizu F."/>
            <person name="Wakebe H."/>
            <person name="Hishigaki H."/>
            <person name="Watanabe T."/>
            <person name="Sugiyama A."/>
            <person name="Takemoto M."/>
            <person name="Kawakami B."/>
            <person name="Yamazaki M."/>
            <person name="Watanabe K."/>
            <person name="Kumagai A."/>
            <person name="Itakura S."/>
            <person name="Fukuzumi Y."/>
            <person name="Fujimori Y."/>
            <person name="Komiyama M."/>
            <person name="Tashiro H."/>
            <person name="Tanigami A."/>
            <person name="Fujiwara T."/>
            <person name="Ono T."/>
            <person name="Yamada K."/>
            <person name="Fujii Y."/>
            <person name="Ozaki K."/>
            <person name="Hirao M."/>
            <person name="Ohmori Y."/>
            <person name="Kawabata A."/>
            <person name="Hikiji T."/>
            <person name="Kobatake N."/>
            <person name="Inagaki H."/>
            <person name="Ikema Y."/>
            <person name="Okamoto S."/>
            <person name="Okitani R."/>
            <person name="Kawakami T."/>
            <person name="Noguchi S."/>
            <person name="Itoh T."/>
            <person name="Shigeta K."/>
            <person name="Senba T."/>
            <person name="Matsumura K."/>
            <person name="Nakajima Y."/>
            <person name="Mizuno T."/>
            <person name="Morinaga M."/>
            <person name="Sasaki M."/>
            <person name="Togashi T."/>
            <person name="Oyama M."/>
            <person name="Hata H."/>
            <person name="Watanabe M."/>
            <person name="Komatsu T."/>
            <person name="Mizushima-Sugano J."/>
            <person name="Satoh T."/>
            <person name="Shirai Y."/>
            <person name="Takahashi Y."/>
            <person name="Nakagawa K."/>
            <person name="Okumura K."/>
            <person name="Nagase T."/>
            <person name="Nomura N."/>
            <person name="Kikuchi H."/>
            <person name="Masuho Y."/>
            <person name="Yamashita R."/>
            <person name="Nakai K."/>
            <person name="Yada T."/>
            <person name="Nakamura Y."/>
            <person name="Ohara O."/>
            <person name="Isogai T."/>
            <person name="Sugano S."/>
        </authorList>
    </citation>
    <scope>NUCLEOTIDE SEQUENCE [LARGE SCALE MRNA] (ISOFORM LONG)</scope>
    <scope>VARIANT VAL-790</scope>
    <source>
        <tissue>Uterus</tissue>
    </source>
</reference>
<reference key="3">
    <citation type="submission" date="2005-04" db="EMBL/GenBank/DDBJ databases">
        <authorList>
            <consortium name="NIEHS SNPs program"/>
        </authorList>
    </citation>
    <scope>NUCLEOTIDE SEQUENCE [GENOMIC DNA]</scope>
    <scope>VARIANTS SER-471; VAL-790; LEU-930; ARG-1110; ALA-1347 AND SER-1605</scope>
</reference>
<reference key="4">
    <citation type="journal article" date="2006" name="Nature">
        <title>Analysis of the DNA sequence and duplication history of human chromosome 15.</title>
        <authorList>
            <person name="Zody M.C."/>
            <person name="Garber M."/>
            <person name="Sharpe T."/>
            <person name="Young S.K."/>
            <person name="Rowen L."/>
            <person name="O'Neill K."/>
            <person name="Whittaker C.A."/>
            <person name="Kamal M."/>
            <person name="Chang J.L."/>
            <person name="Cuomo C.A."/>
            <person name="Dewar K."/>
            <person name="FitzGerald M.G."/>
            <person name="Kodira C.D."/>
            <person name="Madan A."/>
            <person name="Qin S."/>
            <person name="Yang X."/>
            <person name="Abbasi N."/>
            <person name="Abouelleil A."/>
            <person name="Arachchi H.M."/>
            <person name="Baradarani L."/>
            <person name="Birditt B."/>
            <person name="Bloom S."/>
            <person name="Bloom T."/>
            <person name="Borowsky M.L."/>
            <person name="Burke J."/>
            <person name="Butler J."/>
            <person name="Cook A."/>
            <person name="DeArellano K."/>
            <person name="DeCaprio D."/>
            <person name="Dorris L. III"/>
            <person name="Dors M."/>
            <person name="Eichler E.E."/>
            <person name="Engels R."/>
            <person name="Fahey J."/>
            <person name="Fleetwood P."/>
            <person name="Friedman C."/>
            <person name="Gearin G."/>
            <person name="Hall J.L."/>
            <person name="Hensley G."/>
            <person name="Johnson E."/>
            <person name="Jones C."/>
            <person name="Kamat A."/>
            <person name="Kaur A."/>
            <person name="Locke D.P."/>
            <person name="Madan A."/>
            <person name="Munson G."/>
            <person name="Jaffe D.B."/>
            <person name="Lui A."/>
            <person name="Macdonald P."/>
            <person name="Mauceli E."/>
            <person name="Naylor J.W."/>
            <person name="Nesbitt R."/>
            <person name="Nicol R."/>
            <person name="O'Leary S.B."/>
            <person name="Ratcliffe A."/>
            <person name="Rounsley S."/>
            <person name="She X."/>
            <person name="Sneddon K.M.B."/>
            <person name="Stewart S."/>
            <person name="Sougnez C."/>
            <person name="Stone S.M."/>
            <person name="Topham K."/>
            <person name="Vincent D."/>
            <person name="Wang S."/>
            <person name="Zimmer A.R."/>
            <person name="Birren B.W."/>
            <person name="Hood L."/>
            <person name="Lander E.S."/>
            <person name="Nusbaum C."/>
        </authorList>
    </citation>
    <scope>NUCLEOTIDE SEQUENCE [LARGE SCALE GENOMIC DNA]</scope>
</reference>
<reference key="5">
    <citation type="journal article" date="2004" name="Genome Res.">
        <title>The status, quality, and expansion of the NIH full-length cDNA project: the Mammalian Gene Collection (MGC).</title>
        <authorList>
            <consortium name="The MGC Project Team"/>
        </authorList>
    </citation>
    <scope>NUCLEOTIDE SEQUENCE [LARGE SCALE MRNA] (ISOFORM LONG)</scope>
</reference>
<reference key="6">
    <citation type="journal article" date="1994" name="J. Cell Biol.">
        <title>Direct association of occludin with ZO-1 and its possible involvement in the localization of occludin at tight junctions.</title>
        <authorList>
            <person name="Furuse M."/>
            <person name="Itoh M."/>
            <person name="Hirase T."/>
            <person name="Nagafuchi A."/>
            <person name="Yonemura S."/>
            <person name="Tsukita S."/>
            <person name="Tsukita S."/>
        </authorList>
    </citation>
    <scope>SUBCELLULAR LOCATION</scope>
    <scope>INTERACTION WITH OCLN</scope>
    <scope>FUNCTION</scope>
</reference>
<reference key="7">
    <citation type="journal article" date="1995" name="J. Cell Sci.">
        <title>Epidermal growth factor induces tyrosine phosphorylation and reorganization of the tight junction protein ZO-1 in A431 cells.</title>
        <authorList>
            <person name="Van Itallie C.M."/>
            <person name="Balda M.S."/>
            <person name="Anderson J.M."/>
        </authorList>
    </citation>
    <scope>PHOSPHORYLATION</scope>
</reference>
<reference key="8">
    <citation type="journal article" date="1998" name="J. Biol. Chem.">
        <title>The tight junction protein ZO-1 establishes a link between the transmembrane protein occludin and the actin cytoskeleton.</title>
        <authorList>
            <person name="Fanning A.S."/>
            <person name="Jameson B.J."/>
            <person name="Jesaitis L.A."/>
            <person name="Anderson J.M."/>
        </authorList>
    </citation>
    <scope>FUNCTION</scope>
    <scope>DOMAIN</scope>
    <scope>INTERACTION WITH ACTIN; TJP2 AND OCLN</scope>
</reference>
<reference key="9">
    <citation type="journal article" date="2001" name="Proc. Natl. Acad. Sci. U.S.A.">
        <title>The coxsackievirus and adenovirus receptor is a transmembrane component of the tight junction.</title>
        <authorList>
            <person name="Cohen C.J."/>
            <person name="Shieh J.T.C."/>
            <person name="Pickles R.J."/>
            <person name="Okegawa T."/>
            <person name="Hsieh J.-T."/>
            <person name="Bergelson J.M."/>
        </authorList>
    </citation>
    <scope>SUBCELLULAR LOCATION</scope>
    <scope>INTERACTION WITH CXADR</scope>
</reference>
<reference key="10">
    <citation type="journal article" date="2002" name="FASEB J.">
        <title>Isolation and functional characterization of the actin binding region in the tight junction protein ZO-1.</title>
        <authorList>
            <person name="Fanning A.S."/>
            <person name="Ma T.Y."/>
            <person name="Anderson J.M."/>
        </authorList>
    </citation>
    <scope>DOMAIN</scope>
    <scope>INTERACTION WITH ACTIN</scope>
</reference>
<reference key="11">
    <citation type="journal article" date="2002" name="J. Biol. Chem.">
        <title>Evidence for a functional interaction between cingulin and ZO-1 in cultured cells.</title>
        <authorList>
            <person name="D'Atri F."/>
            <person name="Nadalutti F."/>
            <person name="Citi S."/>
        </authorList>
    </citation>
    <scope>INTERACTION WITH CGN</scope>
</reference>
<reference key="12">
    <citation type="journal article" date="2002" name="J. Biol. Chem.">
        <title>Molecular cloning, functional expression, and tissue distribution of a novel human gap junction-forming protein, connexin-31.9. Interaction with zona occludens protein-1.</title>
        <authorList>
            <person name="Nielsen P.A."/>
            <person name="Beahm D.L."/>
            <person name="Giepmans B.N."/>
            <person name="Baruch A."/>
            <person name="Hall J.E."/>
            <person name="Kumar N.M."/>
        </authorList>
    </citation>
    <scope>INTERACTION WITH GJD3</scope>
</reference>
<reference key="13">
    <citation type="journal article" date="2004" name="Neuroscience">
        <title>Connexin47, connexin29 and connexin32 co-expression in oligodendrocytes and Cx47 association with zonula occludens-1 (ZO-1) in mouse brain.</title>
        <authorList>
            <person name="Li X."/>
            <person name="Ionescu A.V."/>
            <person name="Lynn B.D."/>
            <person name="Lu S."/>
            <person name="Kamasawa N."/>
            <person name="Morita M."/>
            <person name="Davidson K.G.V."/>
            <person name="Yasumura T."/>
            <person name="Rash J.E."/>
            <person name="Nagy J.I."/>
        </authorList>
    </citation>
    <scope>INTERACTION WITH GJA12</scope>
</reference>
<reference key="14">
    <citation type="journal article" date="2006" name="Cell">
        <title>Global, in vivo, and site-specific phosphorylation dynamics in signaling networks.</title>
        <authorList>
            <person name="Olsen J.V."/>
            <person name="Blagoev B."/>
            <person name="Gnad F."/>
            <person name="Macek B."/>
            <person name="Kumar C."/>
            <person name="Mortensen P."/>
            <person name="Mann M."/>
        </authorList>
    </citation>
    <scope>PHOSPHORYLATION [LARGE SCALE ANALYSIS] AT SER-337 AND SER-1366</scope>
    <scope>IDENTIFICATION BY MASS SPECTROMETRY [LARGE SCALE ANALYSIS]</scope>
    <source>
        <tissue>Cervix carcinoma</tissue>
    </source>
</reference>
<reference key="15">
    <citation type="journal article" date="2006" name="J. Cell Biol.">
        <title>Cdc42 GEF Tuba regulates the junctional configuration of simple epithelial cells.</title>
        <authorList>
            <person name="Otani T."/>
            <person name="Ichii T."/>
            <person name="Aono S."/>
            <person name="Takeichi M."/>
        </authorList>
    </citation>
    <scope>INTERACTION WITH DNMBP</scope>
</reference>
<reference key="16">
    <citation type="journal article" date="2007" name="J. Biol. Chem.">
        <title>Domain-swapped dimerization of the second PDZ domain of ZO2 may provide a structural basis for the polymerization of claudins.</title>
        <authorList>
            <person name="Wu J."/>
            <person name="Yang Y."/>
            <person name="Zhang J."/>
            <person name="Ji P."/>
            <person name="Du W."/>
            <person name="Jiang P."/>
            <person name="Xie D."/>
            <person name="Huang H."/>
            <person name="Wu M."/>
            <person name="Zhang G."/>
            <person name="Wu J."/>
            <person name="Shi Y."/>
        </authorList>
    </citation>
    <scope>INTERACTION WITH TJP2</scope>
</reference>
<reference key="17">
    <citation type="journal article" date="2008" name="J. Proteome Res.">
        <title>Combining protein-based IMAC, peptide-based IMAC, and MudPIT for efficient phosphoproteomic analysis.</title>
        <authorList>
            <person name="Cantin G.T."/>
            <person name="Yi W."/>
            <person name="Lu B."/>
            <person name="Park S.K."/>
            <person name="Xu T."/>
            <person name="Lee J.-D."/>
            <person name="Yates J.R. III"/>
        </authorList>
    </citation>
    <scope>PHOSPHORYLATION [LARGE SCALE ANALYSIS] AT SER-125 AND SER-912</scope>
    <scope>IDENTIFICATION BY MASS SPECTROMETRY [LARGE SCALE ANALYSIS]</scope>
    <source>
        <tissue>Cervix carcinoma</tissue>
    </source>
</reference>
<reference key="18">
    <citation type="journal article" date="2008" name="Proc. Natl. Acad. Sci. U.S.A.">
        <title>A quantitative atlas of mitotic phosphorylation.</title>
        <authorList>
            <person name="Dephoure N."/>
            <person name="Zhou C."/>
            <person name="Villen J."/>
            <person name="Beausoleil S.A."/>
            <person name="Bakalarski C.E."/>
            <person name="Elledge S.J."/>
            <person name="Gygi S.P."/>
        </authorList>
    </citation>
    <scope>PHOSPHORYLATION [LARGE SCALE ANALYSIS] AT SER-125; SER-277; SER-329; SER-617; SER-912; SER-968 AND SER-1545</scope>
    <scope>PHOSPHORYLATION [LARGE SCALE ANALYSIS] AT SER-912 (ISOFORM SHORT)</scope>
    <scope>IDENTIFICATION BY MASS SPECTROMETRY [LARGE SCALE ANALYSIS]</scope>
    <source>
        <tissue>Cervix carcinoma</tissue>
    </source>
</reference>
<reference key="19">
    <citation type="journal article" date="2009" name="Anal. Chem.">
        <title>Lys-N and trypsin cover complementary parts of the phosphoproteome in a refined SCX-based approach.</title>
        <authorList>
            <person name="Gauci S."/>
            <person name="Helbig A.O."/>
            <person name="Slijper M."/>
            <person name="Krijgsveld J."/>
            <person name="Heck A.J."/>
            <person name="Mohammed S."/>
        </authorList>
    </citation>
    <scope>IDENTIFICATION BY MASS SPECTROMETRY [LARGE SCALE ANALYSIS]</scope>
</reference>
<reference key="20">
    <citation type="journal article" date="2009" name="Biol. Cell">
        <title>Characterization of the ubinuclein protein as a new member of the nuclear and adhesion complex components (NACos).</title>
        <authorList>
            <person name="Aho S."/>
            <person name="Lupo J."/>
            <person name="Coly P.-A."/>
            <person name="Sabine A."/>
            <person name="Castellazzi M."/>
            <person name="Morand P."/>
            <person name="Sergeant A."/>
            <person name="Manet E."/>
            <person name="Boyer V."/>
            <person name="Gruffat H."/>
        </authorList>
    </citation>
    <scope>INTERACTION WITH UBN1</scope>
</reference>
<reference key="21">
    <citation type="journal article" date="2009" name="J. Biol. Chem.">
        <title>Density-enhanced phosphatase 1 regulates phosphorylation of tight junction proteins and enhances barrier function of epithelial cells.</title>
        <authorList>
            <person name="Sallee J.L."/>
            <person name="Burridge K."/>
        </authorList>
    </citation>
    <scope>PHOSPHORYLATION</scope>
    <scope>DEPHOSPHORYLATION BY PTPRJ</scope>
</reference>
<reference key="22">
    <citation type="journal article" date="2010" name="Circ. Res.">
        <title>Myozap, a novel intercalated disc protein, activates serum response factor-dependent signaling and is required to maintain cardiac function in vivo.</title>
        <authorList>
            <person name="Seeger T.S."/>
            <person name="Frank D."/>
            <person name="Rohr C."/>
            <person name="Will R."/>
            <person name="Just S."/>
            <person name="Grund C."/>
            <person name="Lyon R."/>
            <person name="Luedde M."/>
            <person name="Koegl M."/>
            <person name="Sheikh F."/>
            <person name="Rottbauer W."/>
            <person name="Franke W.W."/>
            <person name="Katus H.A."/>
            <person name="Olson E.N."/>
            <person name="Frey N."/>
        </authorList>
    </citation>
    <scope>INTERACTION WITH MYZAP</scope>
</reference>
<reference key="23">
    <citation type="journal article" date="2010" name="Sci. Signal.">
        <title>Quantitative phosphoproteomics reveals widespread full phosphorylation site occupancy during mitosis.</title>
        <authorList>
            <person name="Olsen J.V."/>
            <person name="Vermeulen M."/>
            <person name="Santamaria A."/>
            <person name="Kumar C."/>
            <person name="Miller M.L."/>
            <person name="Jensen L.J."/>
            <person name="Gnad F."/>
            <person name="Cox J."/>
            <person name="Jensen T.S."/>
            <person name="Nigg E.A."/>
            <person name="Brunak S."/>
            <person name="Mann M."/>
        </authorList>
    </citation>
    <scope>PHOSPHORYLATION [LARGE SCALE ANALYSIS] AT SER-329; SER-337; SER-353; SER-617; SER-968; SER-1366 AND SER-1617</scope>
    <scope>PHOSPHORYLATION [LARGE SCALE ANALYSIS] AT SER-912 (ISOFORM SHORT)</scope>
    <scope>IDENTIFICATION BY MASS SPECTROMETRY [LARGE SCALE ANALYSIS]</scope>
    <source>
        <tissue>Cervix carcinoma</tissue>
    </source>
</reference>
<reference key="24">
    <citation type="journal article" date="2011" name="BMC Syst. Biol.">
        <title>Initial characterization of the human central proteome.</title>
        <authorList>
            <person name="Burkard T.R."/>
            <person name="Planyavsky M."/>
            <person name="Kaupe I."/>
            <person name="Breitwieser F.P."/>
            <person name="Buerckstuemmer T."/>
            <person name="Bennett K.L."/>
            <person name="Superti-Furga G."/>
            <person name="Colinge J."/>
        </authorList>
    </citation>
    <scope>IDENTIFICATION BY MASS SPECTROMETRY [LARGE SCALE ANALYSIS]</scope>
</reference>
<reference key="25">
    <citation type="journal article" date="2011" name="FASEB J.">
        <title>Zona occludens proteins modulate podosome formation and function.</title>
        <authorList>
            <person name="Kremerskothen J."/>
            <person name="Stoelting M."/>
            <person name="Wiesner C."/>
            <person name="Korb-Pap A."/>
            <person name="van Vliet V."/>
            <person name="Linder S."/>
            <person name="Huber T.B."/>
            <person name="Rottiers P."/>
            <person name="Reuzeau E."/>
            <person name="Genot E."/>
            <person name="Pavenstaedt H."/>
        </authorList>
    </citation>
    <scope>FUNCTION</scope>
    <scope>SUBCELLULAR LOCATION</scope>
    <scope>DOMAIN</scope>
    <scope>ACTIN-BINDING</scope>
</reference>
<reference key="26">
    <citation type="journal article" date="2011" name="PLoS ONE">
        <title>Multi-tasking role of the mechanosensing protein Ankrd2 in the signaling network of striated muscle.</title>
        <authorList>
            <person name="Belgrano A."/>
            <person name="Rakicevic L."/>
            <person name="Mittempergher L."/>
            <person name="Campanaro S."/>
            <person name="Martinelli V.C."/>
            <person name="Mouly V."/>
            <person name="Valle G."/>
            <person name="Kojic S."/>
            <person name="Faulkner G."/>
        </authorList>
    </citation>
    <scope>INTERACTION WITH ANKRD2</scope>
</reference>
<reference key="27">
    <citation type="journal article" date="2011" name="Sci. Signal.">
        <title>System-wide temporal characterization of the proteome and phosphoproteome of human embryonic stem cell differentiation.</title>
        <authorList>
            <person name="Rigbolt K.T."/>
            <person name="Prokhorova T.A."/>
            <person name="Akimov V."/>
            <person name="Henningsen J."/>
            <person name="Johansen P.T."/>
            <person name="Kratchmarova I."/>
            <person name="Kassem M."/>
            <person name="Mann M."/>
            <person name="Olsen J.V."/>
            <person name="Blagoev B."/>
        </authorList>
    </citation>
    <scope>PHOSPHORYLATION [LARGE SCALE ANALYSIS] AT SER-125; SER-175; SER-178; SER-179; THR-185; SER-297; SER-300; SER-329; SER-334; SER-337; SER-617; SER-622 AND SER-1366</scope>
    <scope>PHOSPHORYLATION [LARGE SCALE ANALYSIS] AT SER-912 (ISOFORM SHORT)</scope>
    <scope>IDENTIFICATION BY MASS SPECTROMETRY [LARGE SCALE ANALYSIS]</scope>
</reference>
<reference key="28">
    <citation type="journal article" date="2013" name="J. Proteome Res.">
        <title>Toward a comprehensive characterization of a human cancer cell phosphoproteome.</title>
        <authorList>
            <person name="Zhou H."/>
            <person name="Di Palma S."/>
            <person name="Preisinger C."/>
            <person name="Peng M."/>
            <person name="Polat A.N."/>
            <person name="Heck A.J."/>
            <person name="Mohammed S."/>
        </authorList>
    </citation>
    <scope>PHOSPHORYLATION [LARGE SCALE ANALYSIS] AT SER-125; SER-212; SER-329; THR-354; SER-617; SER-837; SER-912; SER-968; SER-1111; SER-1413 AND SER-1617</scope>
    <scope>IDENTIFICATION BY MASS SPECTROMETRY [LARGE SCALE ANALYSIS]</scope>
    <source>
        <tissue>Cervix carcinoma</tissue>
        <tissue>Erythroleukemia</tissue>
    </source>
</reference>
<reference key="29">
    <citation type="journal article" date="2014" name="J. Proteomics">
        <title>An enzyme assisted RP-RPLC approach for in-depth analysis of human liver phosphoproteome.</title>
        <authorList>
            <person name="Bian Y."/>
            <person name="Song C."/>
            <person name="Cheng K."/>
            <person name="Dong M."/>
            <person name="Wang F."/>
            <person name="Huang J."/>
            <person name="Sun D."/>
            <person name="Wang L."/>
            <person name="Ye M."/>
            <person name="Zou H."/>
        </authorList>
    </citation>
    <scope>PHOSPHORYLATION [LARGE SCALE ANALYSIS] AT SER-125; SER-175; SER-179; THR-267; SER-275; SER-277; SER-280; SER-284; SER-290; SER-294; SER-297; SER-300; SER-617; THR-809; SER-821; THR-854; THR-861; THR-868; SER-912; SER-968 AND SER-1617</scope>
    <scope>PHOSPHORYLATION [LARGE SCALE ANALYSIS] AT SER-912 (ISOFORM SHORT)</scope>
    <scope>IDENTIFICATION BY MASS SPECTROMETRY [LARGE SCALE ANALYSIS]</scope>
    <source>
        <tissue>Liver</tissue>
    </source>
</reference>
<reference key="30">
    <citation type="journal article" date="2017" name="Sci. Rep.">
        <title>Loss of DLG5 promotes breast cancer malignancy by inhibiting the Hippo signaling pathway.</title>
        <authorList>
            <person name="Liu J."/>
            <person name="Li J."/>
            <person name="Li P."/>
            <person name="Wang Y."/>
            <person name="Liang Z."/>
            <person name="Jiang Y."/>
            <person name="Li J."/>
            <person name="Feng C."/>
            <person name="Wang R."/>
            <person name="Chen H."/>
            <person name="Zhou C."/>
            <person name="Zhang J."/>
            <person name="Yang J."/>
            <person name="Liu P."/>
        </authorList>
    </citation>
    <scope>SUBCELLULAR LOCATION</scope>
</reference>
<reference key="31">
    <citation type="journal article" date="2019" name="Gastroenterology">
        <title>Sperm Flagellar 1 Binds Actin in Intestinal Epithelial Cells and Contributes to Formation of Filopodia and Lamellipodia.</title>
        <authorList>
            <person name="Tapia R."/>
            <person name="Perez-Yepez E.A."/>
            <person name="Carlino M.J."/>
            <person name="Karandikar U.C."/>
            <person name="Kralicek S.E."/>
            <person name="Estes M.K."/>
            <person name="Hecht G.A."/>
        </authorList>
    </citation>
    <scope>INTERACTION WITH SPEF1</scope>
    <scope>SUBCELLULAR LOCATION</scope>
</reference>
<reference key="32">
    <citation type="journal article" date="2006" name="J. Biol. Chem.">
        <title>Comparative structural analysis of the erbin PDZ domain and the first PDZ domain of ZO-1. Insights into determinants of PDZ domain specificity.</title>
        <authorList>
            <person name="Appleton B.A."/>
            <person name="Zhang Y."/>
            <person name="Wu P."/>
            <person name="Yin J.P."/>
            <person name="Hunziker W."/>
            <person name="Skelton N.J."/>
            <person name="Sidhu S.S."/>
            <person name="Wiesmann C."/>
        </authorList>
    </citation>
    <scope>X-RAY CRYSTALLOGRAPHY (1.6 ANGSTROMS) OF 18-110</scope>
    <scope>SUBUNIT</scope>
</reference>
<reference key="33">
    <citation type="journal article" date="2007" name="J. Biol. Chem.">
        <title>Domain swapping within PDZ2 is responsible for dimerization of ZO proteins.</title>
        <authorList>
            <person name="Fanning A.S."/>
            <person name="Lye M.F."/>
            <person name="Anderson J.M."/>
            <person name="Lavie A."/>
        </authorList>
    </citation>
    <scope>X-RAY CRYSTALLOGRAPHY (1.7 ANGSTROMS) OF 185-264</scope>
    <scope>SUBUNIT</scope>
</reference>
<reference key="34">
    <citation type="journal article" date="2008" name="EMBO J.">
        <title>Domain-swapped dimerization of ZO-1 PDZ2 generates specific and regulatory connexin43-binding sites.</title>
        <authorList>
            <person name="Chen J."/>
            <person name="Pan L."/>
            <person name="Wei Z."/>
            <person name="Zhao Y."/>
            <person name="Zhang M."/>
        </authorList>
    </citation>
    <scope>X-RAY CRYSTALLOGRAPHY (2.4 ANGSTROMS) OF 182-273 IN COMPLEX WITH GJA1 PEPTIDE</scope>
    <scope>SUBUNIT</scope>
    <scope>MUTAGENESIS OF ARG-201 AND LYS-209</scope>
    <scope>SUBCELLULAR LOCATION</scope>
    <scope>INTERACTION WITH GJA1</scope>
</reference>
<reference key="35">
    <citation type="journal article" date="2010" name="J. Biol. Chem.">
        <title>Insights into regulated ligand binding sites from the structure of ZO-1 Src homology 3-guanylate kinase module.</title>
        <authorList>
            <person name="Lye M.F."/>
            <person name="Fanning A.S."/>
            <person name="Su Y."/>
            <person name="Anderson J.M."/>
            <person name="Lavie A."/>
        </authorList>
    </citation>
    <scope>X-RAY CRYSTALLOGRAPHY (2.6 ANGSTROMS) OF 516-803</scope>
    <scope>INTERACTION WITH CALM</scope>
</reference>
<reference key="36">
    <citation type="journal article" date="2011" name="EMBO J.">
        <title>Cdc42-dependent formation of the ZO-1/MRCKbeta complex at the leading edge controls cell migration.</title>
        <authorList>
            <person name="Huo L."/>
            <person name="Wen W."/>
            <person name="Wang R."/>
            <person name="Kam C."/>
            <person name="Xia J."/>
            <person name="Feng W."/>
            <person name="Zhang M."/>
        </authorList>
    </citation>
    <scope>STRUCTURE BY NMR OF 1631-1748 OF MUTANT 1699-MET-CYS-1700 IN COMPLEX WITH MYZAP</scope>
    <scope>FUNCTION</scope>
    <scope>SUBCELLULAR LOCATION</scope>
    <scope>MUTAGENESIS OF 1699-MET-CYS-1700 AND PHE-1748</scope>
    <scope>INTERACTION WITH MYZAP AND CDC42BPB</scope>
</reference>
<reference key="37">
    <citation type="journal article" date="2011" name="Proteins">
        <title>Solution structure of the second PDZ domain of Zonula Occludens 1.</title>
        <authorList>
            <person name="Ji P."/>
            <person name="Yang G."/>
            <person name="Zhang J."/>
            <person name="Wu J."/>
            <person name="Chen Z."/>
            <person name="Gong Q."/>
            <person name="Wu J."/>
            <person name="Shi Y."/>
        </authorList>
    </citation>
    <scope>STRUCTURE BY NMR OF 185-264</scope>
</reference>
<sequence length="1748" mass="195459">MSARAAAAKSTAMEETAIWEQHTVTLHRAPGFGFGIAISGGRDNPHFQSGETSIVISDVLKGGPAEGQLQENDRVAMVNGVSMDNVEHAFAVQQLRKSGKNAKITIRRKKKVQIPVSRPDPEPVSDNEEDSYDEEIHDPRSGRSGVVNRRSEKIWPRDRSASRERSLSPRSDRRSVASSQPAKPTKVTLVKSRKNEEYGLRLASHIFVKEISQDSLAARDGNIQEGDVVLKINGTVTENMSLTDAKTLIERSKGKLKMVVQRDERATLLNVPDLSDSIHSANASERDDISEIQSLASDHSGRSHDRPPRRSRSRSPDQRSEPSDHSRHSPQQPSNGSLRSRDEERISKPGAVSTPVKHADDHTPKTVEEVTVERNEKQTPSLPEPKPVYAQVGQPDVDLPVSPSDGVLPNSTHEDGILRPSMKLVKFRKGDSVGLRLAGGNDVGIFVAGVLEDSPAAKEGLEEGDQILRVNNVDFTNIIREEAVLFLLDLPKGEEVTILAQKKKDVYRRIVESDVGDSFYIRTHFEYEKESPYGLSFNKGEVFRVVDTLYNGKLGSWLAIRIGKNHKEVERGIIPNKNRAEQLASVQYTLPKTAGGDRADFWRFRGLRSSKRNLRKSREDLSAQPVQTKFPAYERVVLREAGFLRPVTIFGPIADVAREKLAREEPDIYQIAKSEPRDAGTDQRSSGIIRLHTIKQIIDQDKHALLDVTPNAVDRLNYAQWYPIVVFLNPDSKQGVKTMRMRLCPESRKSARKLYERSHKLRKNNHHLFTTTINLNSMNDGWYGALKEAIQQQQNQLVWVSEGKADGATSDDLDLHDDRLSYLSAPGSEYSMYSTDSRHTSDYEDTDTEGGAYTDQELDETLNDEVGTPPESAITRSSEPVREDSSGMHHENQTYPPYSPQAQPQPIHRIDSPGFKPASQQKAEASSPVPYLSPETNPASSTSAVNHNVNLTNVRLEEPTPAPSTSYSPQADSLRTPSTEAAHIMLRDQEPSLSSHVDPTKVYRKDPYPEEMMRQNHVLKQPAVSHPGHRPDKEPNLTYEPQLPYVEKQASRDLEQPTYRYESSSYTDQFSRNYEHRLRYEDRVPMYEEQWSYYDDKQPYPSRPPFDNQHSQDLDSRQHPEESSERGYFPRFEEPAPLSYDSRPRYEQAPRASALRHEEQPAPGYDTHGRLRPEAQPHPSAGPKPAESKQYFEQYSRSYEQVPPQGFTSRAGHFEPLHGAAAVPPLIPSSQHKPEALPSNTKPLPPPPTQTEEEEDPAMKPQSVLTRVKMFENKRSASLETKKDVNDTGSFKPPEVASKPSGAPIIGPKPTSQNQFSEHDKTLYRIPEPQKPQLKPPEDIVRSNHYDPEEDEEYYRKQLSYFDRRSFENKPPAHIAASHLSEPAKPAHSQNQSNFSSYSSKGKPPEADGVDRSFGEKRYEPIQATPPPPPLPSQYAQPSQPVTSASLHIHSKGAHGEGNSVSLDFQNSLVSKPDPPPSQNKPATFRPPNREDTAQAAFYPQKSFPDKAPVNGTEQTQKTVTPAYNRFTPKPYTSSARPFERKFESPKFNHNLLPSETAHKPDLSSKTPTSPKTLVKSHSLAQPPEFDSGVETFSIHAEKPKYQINNISTVPKAIPVSPSAVEEDEDEDGHTVVATARGIFNSNGGVLSSIETGVSIIIPQGAIPEGVEQEIYFKVCRDNSILPPLDKEKGETLLSPLVMCGPHGLKFLKPVELRLPHCDPKTWQNKCLPGDPNYLVGANCVSVLIDHF</sequence>
<organism>
    <name type="scientific">Homo sapiens</name>
    <name type="common">Human</name>
    <dbReference type="NCBI Taxonomy" id="9606"/>
    <lineage>
        <taxon>Eukaryota</taxon>
        <taxon>Metazoa</taxon>
        <taxon>Chordata</taxon>
        <taxon>Craniata</taxon>
        <taxon>Vertebrata</taxon>
        <taxon>Euteleostomi</taxon>
        <taxon>Mammalia</taxon>
        <taxon>Eutheria</taxon>
        <taxon>Euarchontoglires</taxon>
        <taxon>Primates</taxon>
        <taxon>Haplorrhini</taxon>
        <taxon>Catarrhini</taxon>
        <taxon>Hominidae</taxon>
        <taxon>Homo</taxon>
    </lineage>
</organism>
<evidence type="ECO:0000250" key="1">
    <source>
        <dbReference type="UniProtKB" id="A0A0G2K2P5"/>
    </source>
</evidence>
<evidence type="ECO:0000250" key="2">
    <source>
        <dbReference type="UniProtKB" id="O97758"/>
    </source>
</evidence>
<evidence type="ECO:0000250" key="3">
    <source>
        <dbReference type="UniProtKB" id="P39447"/>
    </source>
</evidence>
<evidence type="ECO:0000255" key="4">
    <source>
        <dbReference type="PROSITE-ProRule" id="PRU00100"/>
    </source>
</evidence>
<evidence type="ECO:0000255" key="5">
    <source>
        <dbReference type="PROSITE-ProRule" id="PRU00143"/>
    </source>
</evidence>
<evidence type="ECO:0000255" key="6">
    <source>
        <dbReference type="PROSITE-ProRule" id="PRU00192"/>
    </source>
</evidence>
<evidence type="ECO:0000255" key="7">
    <source>
        <dbReference type="PROSITE-ProRule" id="PRU00485"/>
    </source>
</evidence>
<evidence type="ECO:0000256" key="8">
    <source>
        <dbReference type="SAM" id="MobiDB-lite"/>
    </source>
</evidence>
<evidence type="ECO:0000269" key="9">
    <source>
    </source>
</evidence>
<evidence type="ECO:0000269" key="10">
    <source>
    </source>
</evidence>
<evidence type="ECO:0000269" key="11">
    <source>
    </source>
</evidence>
<evidence type="ECO:0000269" key="12">
    <source>
    </source>
</evidence>
<evidence type="ECO:0000269" key="13">
    <source>
    </source>
</evidence>
<evidence type="ECO:0000269" key="14">
    <source>
    </source>
</evidence>
<evidence type="ECO:0000269" key="15">
    <source>
    </source>
</evidence>
<evidence type="ECO:0000269" key="16">
    <source>
    </source>
</evidence>
<evidence type="ECO:0000269" key="17">
    <source>
    </source>
</evidence>
<evidence type="ECO:0000269" key="18">
    <source>
    </source>
</evidence>
<evidence type="ECO:0000269" key="19">
    <source>
    </source>
</evidence>
<evidence type="ECO:0000269" key="20">
    <source>
    </source>
</evidence>
<evidence type="ECO:0000269" key="21">
    <source>
    </source>
</evidence>
<evidence type="ECO:0000269" key="22">
    <source>
    </source>
</evidence>
<evidence type="ECO:0000269" key="23">
    <source>
    </source>
</evidence>
<evidence type="ECO:0000269" key="24">
    <source>
    </source>
</evidence>
<evidence type="ECO:0000269" key="25">
    <source>
    </source>
</evidence>
<evidence type="ECO:0000269" key="26">
    <source>
    </source>
</evidence>
<evidence type="ECO:0000269" key="27">
    <source>
    </source>
</evidence>
<evidence type="ECO:0000269" key="28">
    <source>
    </source>
</evidence>
<evidence type="ECO:0000269" key="29">
    <source>
    </source>
</evidence>
<evidence type="ECO:0000269" key="30">
    <source>
    </source>
</evidence>
<evidence type="ECO:0000269" key="31">
    <source>
    </source>
</evidence>
<evidence type="ECO:0000269" key="32">
    <source>
    </source>
</evidence>
<evidence type="ECO:0000269" key="33">
    <source ref="3"/>
</evidence>
<evidence type="ECO:0000303" key="34">
    <source>
    </source>
</evidence>
<evidence type="ECO:0000305" key="35"/>
<evidence type="ECO:0000312" key="36">
    <source>
        <dbReference type="HGNC" id="HGNC:11827"/>
    </source>
</evidence>
<evidence type="ECO:0007744" key="37">
    <source>
    </source>
</evidence>
<evidence type="ECO:0007744" key="38">
    <source>
    </source>
</evidence>
<evidence type="ECO:0007744" key="39">
    <source>
    </source>
</evidence>
<evidence type="ECO:0007744" key="40">
    <source>
    </source>
</evidence>
<evidence type="ECO:0007744" key="41">
    <source>
    </source>
</evidence>
<evidence type="ECO:0007744" key="42">
    <source>
    </source>
</evidence>
<evidence type="ECO:0007744" key="43">
    <source>
    </source>
</evidence>
<evidence type="ECO:0007829" key="44">
    <source>
        <dbReference type="PDB" id="2H2B"/>
    </source>
</evidence>
<evidence type="ECO:0007829" key="45">
    <source>
        <dbReference type="PDB" id="2JWE"/>
    </source>
</evidence>
<evidence type="ECO:0007829" key="46">
    <source>
        <dbReference type="PDB" id="2KXR"/>
    </source>
</evidence>
<evidence type="ECO:0007829" key="47">
    <source>
        <dbReference type="PDB" id="2KXS"/>
    </source>
</evidence>
<evidence type="ECO:0007829" key="48">
    <source>
        <dbReference type="PDB" id="2RCZ"/>
    </source>
</evidence>
<evidence type="ECO:0007829" key="49">
    <source>
        <dbReference type="PDB" id="3CYY"/>
    </source>
</evidence>
<evidence type="ECO:0007829" key="50">
    <source>
        <dbReference type="PDB" id="3SHW"/>
    </source>
</evidence>
<evidence type="ECO:0007829" key="51">
    <source>
        <dbReference type="PDB" id="3TSV"/>
    </source>
</evidence>
<evidence type="ECO:0007829" key="52">
    <source>
        <dbReference type="PDB" id="3TSZ"/>
    </source>
</evidence>
<evidence type="ECO:0007829" key="53">
    <source>
        <dbReference type="PDB" id="4Q2Q"/>
    </source>
</evidence>
<evidence type="ECO:0007829" key="54">
    <source>
        <dbReference type="PDB" id="4YYX"/>
    </source>
</evidence>
<protein>
    <recommendedName>
        <fullName evidence="36">Tight junction protein 1</fullName>
    </recommendedName>
    <alternativeName>
        <fullName evidence="34">Tight junction protein ZO-1</fullName>
    </alternativeName>
    <alternativeName>
        <fullName>Zona occludens protein 1</fullName>
    </alternativeName>
    <alternativeName>
        <fullName>Zonula occludens protein 1</fullName>
    </alternativeName>
</protein>
<proteinExistence type="evidence at protein level"/>
<dbReference type="EMBL" id="L14837">
    <property type="protein sequence ID" value="AAA02891.1"/>
    <property type="status" value="ALT_INIT"/>
    <property type="molecule type" value="mRNA"/>
</dbReference>
<dbReference type="EMBL" id="AK304758">
    <property type="protein sequence ID" value="BAG65513.1"/>
    <property type="molecule type" value="mRNA"/>
</dbReference>
<dbReference type="EMBL" id="DQ015919">
    <property type="protein sequence ID" value="AAY22179.1"/>
    <property type="molecule type" value="Genomic_DNA"/>
</dbReference>
<dbReference type="EMBL" id="AC022613">
    <property type="status" value="NOT_ANNOTATED_CDS"/>
    <property type="molecule type" value="Genomic_DNA"/>
</dbReference>
<dbReference type="EMBL" id="BC111712">
    <property type="protein sequence ID" value="AAI11713.1"/>
    <property type="molecule type" value="mRNA"/>
</dbReference>
<dbReference type="CCDS" id="CCDS42007.1">
    <molecule id="Q07157-1"/>
</dbReference>
<dbReference type="CCDS" id="CCDS45199.1">
    <molecule id="Q07157-2"/>
</dbReference>
<dbReference type="PIR" id="A47747">
    <property type="entry name" value="A47747"/>
</dbReference>
<dbReference type="RefSeq" id="NP_003248.3">
    <molecule id="Q07157-1"/>
    <property type="nucleotide sequence ID" value="NM_003257.4"/>
</dbReference>
<dbReference type="RefSeq" id="NP_783297.2">
    <molecule id="Q07157-2"/>
    <property type="nucleotide sequence ID" value="NM_175610.4"/>
</dbReference>
<dbReference type="PDB" id="2H2B">
    <property type="method" value="X-ray"/>
    <property type="resolution" value="1.60 A"/>
    <property type="chains" value="A=18-110"/>
</dbReference>
<dbReference type="PDB" id="2H2C">
    <property type="method" value="X-ray"/>
    <property type="resolution" value="2.00 A"/>
    <property type="chains" value="A=18-110"/>
</dbReference>
<dbReference type="PDB" id="2H3M">
    <property type="method" value="X-ray"/>
    <property type="resolution" value="2.90 A"/>
    <property type="chains" value="A=18-110"/>
</dbReference>
<dbReference type="PDB" id="2JWE">
    <property type="method" value="NMR"/>
    <property type="chains" value="A/B=185-264"/>
</dbReference>
<dbReference type="PDB" id="2KXR">
    <property type="method" value="NMR"/>
    <property type="chains" value="A=1631-1748"/>
</dbReference>
<dbReference type="PDB" id="2KXS">
    <property type="method" value="NMR"/>
    <property type="chains" value="A=1631-1748"/>
</dbReference>
<dbReference type="PDB" id="2RCZ">
    <property type="method" value="X-ray"/>
    <property type="resolution" value="1.70 A"/>
    <property type="chains" value="A/B=186-264"/>
</dbReference>
<dbReference type="PDB" id="3CYY">
    <property type="method" value="X-ray"/>
    <property type="resolution" value="2.40 A"/>
    <property type="chains" value="A/B=182-273"/>
</dbReference>
<dbReference type="PDB" id="3LH5">
    <property type="method" value="X-ray"/>
    <property type="resolution" value="2.60 A"/>
    <property type="chains" value="A=516-803"/>
</dbReference>
<dbReference type="PDB" id="3SHU">
    <property type="method" value="X-ray"/>
    <property type="resolution" value="2.75 A"/>
    <property type="chains" value="A/B=421-512"/>
</dbReference>
<dbReference type="PDB" id="3SHW">
    <property type="method" value="X-ray"/>
    <property type="resolution" value="2.90 A"/>
    <property type="chains" value="A=421-888"/>
</dbReference>
<dbReference type="PDB" id="3TSV">
    <property type="method" value="X-ray"/>
    <property type="resolution" value="1.99 A"/>
    <property type="chains" value="A=417-516"/>
</dbReference>
<dbReference type="PDB" id="3TSW">
    <property type="method" value="X-ray"/>
    <property type="resolution" value="2.85 A"/>
    <property type="chains" value="A/B/C/D=417-803"/>
</dbReference>
<dbReference type="PDB" id="3TSZ">
    <property type="method" value="X-ray"/>
    <property type="resolution" value="2.50 A"/>
    <property type="chains" value="A=417-803"/>
</dbReference>
<dbReference type="PDB" id="4OEO">
    <property type="method" value="X-ray"/>
    <property type="resolution" value="1.90 A"/>
    <property type="chains" value="A/B/C=18-110"/>
</dbReference>
<dbReference type="PDB" id="4OEP">
    <property type="method" value="X-ray"/>
    <property type="resolution" value="2.35 A"/>
    <property type="chains" value="A/B=18-110"/>
</dbReference>
<dbReference type="PDB" id="4Q2Q">
    <property type="method" value="X-ray"/>
    <property type="resolution" value="1.45 A"/>
    <property type="chains" value="A=419-504"/>
</dbReference>
<dbReference type="PDB" id="4YYX">
    <property type="method" value="X-ray"/>
    <property type="resolution" value="1.79 A"/>
    <property type="chains" value="A/B=18-110"/>
</dbReference>
<dbReference type="PDBsum" id="2H2B"/>
<dbReference type="PDBsum" id="2H2C"/>
<dbReference type="PDBsum" id="2H3M"/>
<dbReference type="PDBsum" id="2JWE"/>
<dbReference type="PDBsum" id="2KXR"/>
<dbReference type="PDBsum" id="2KXS"/>
<dbReference type="PDBsum" id="2RCZ"/>
<dbReference type="PDBsum" id="3CYY"/>
<dbReference type="PDBsum" id="3LH5"/>
<dbReference type="PDBsum" id="3SHU"/>
<dbReference type="PDBsum" id="3SHW"/>
<dbReference type="PDBsum" id="3TSV"/>
<dbReference type="PDBsum" id="3TSW"/>
<dbReference type="PDBsum" id="3TSZ"/>
<dbReference type="PDBsum" id="4OEO"/>
<dbReference type="PDBsum" id="4OEP"/>
<dbReference type="PDBsum" id="4Q2Q"/>
<dbReference type="PDBsum" id="4YYX"/>
<dbReference type="BMRB" id="Q07157"/>
<dbReference type="SMR" id="Q07157"/>
<dbReference type="BioGRID" id="112937">
    <property type="interactions" value="330"/>
</dbReference>
<dbReference type="CORUM" id="Q07157"/>
<dbReference type="ELM" id="Q07157"/>
<dbReference type="FunCoup" id="Q07157">
    <property type="interactions" value="1846"/>
</dbReference>
<dbReference type="IntAct" id="Q07157">
    <property type="interactions" value="136"/>
</dbReference>
<dbReference type="MINT" id="Q07157"/>
<dbReference type="STRING" id="9606.ENSP00000348416"/>
<dbReference type="ChEMBL" id="CHEMBL4296026"/>
<dbReference type="TCDB" id="8.A.24.1.9">
    <property type="family name" value="the ezrin/radixin/moesin-binding phosphoprotein 50 (ebp50) family"/>
</dbReference>
<dbReference type="GlyCosmos" id="Q07157">
    <property type="glycosylation" value="4 sites, 2 glycans"/>
</dbReference>
<dbReference type="GlyGen" id="Q07157">
    <property type="glycosylation" value="18 sites, 5 N-linked glycans (5 sites), 2 O-linked glycans (10 sites)"/>
</dbReference>
<dbReference type="iPTMnet" id="Q07157"/>
<dbReference type="PhosphoSitePlus" id="Q07157"/>
<dbReference type="SwissPalm" id="Q07157"/>
<dbReference type="BioMuta" id="TJP1"/>
<dbReference type="DMDM" id="85700443"/>
<dbReference type="jPOST" id="Q07157"/>
<dbReference type="MassIVE" id="Q07157"/>
<dbReference type="PaxDb" id="9606-ENSP00000281537"/>
<dbReference type="PeptideAtlas" id="Q07157"/>
<dbReference type="ProteomicsDB" id="58506">
    <molecule id="Q07157-1"/>
</dbReference>
<dbReference type="ProteomicsDB" id="58507">
    <molecule id="Q07157-2"/>
</dbReference>
<dbReference type="Pumba" id="Q07157"/>
<dbReference type="Antibodypedia" id="783">
    <property type="antibodies" value="438 antibodies from 40 providers"/>
</dbReference>
<dbReference type="DNASU" id="7082"/>
<dbReference type="Ensembl" id="ENST00000346128.10">
    <molecule id="Q07157-1"/>
    <property type="protein sequence ID" value="ENSP00000281537.7"/>
    <property type="gene ID" value="ENSG00000104067.17"/>
</dbReference>
<dbReference type="Ensembl" id="ENST00000545208.6">
    <molecule id="Q07157-2"/>
    <property type="protein sequence ID" value="ENSP00000441202.2"/>
    <property type="gene ID" value="ENSG00000104067.17"/>
</dbReference>
<dbReference type="Ensembl" id="ENST00000621049.4">
    <property type="protein sequence ID" value="ENSP00000484535.2"/>
    <property type="gene ID" value="ENSG00000277401.4"/>
</dbReference>
<dbReference type="GeneID" id="7082"/>
<dbReference type="KEGG" id="hsa:7082"/>
<dbReference type="UCSC" id="uc001zcr.4">
    <molecule id="Q07157-1"/>
    <property type="organism name" value="human"/>
</dbReference>
<dbReference type="AGR" id="HGNC:11827"/>
<dbReference type="CTD" id="7082"/>
<dbReference type="DisGeNET" id="7082"/>
<dbReference type="GeneCards" id="TJP1"/>
<dbReference type="HGNC" id="HGNC:11827">
    <property type="gene designation" value="TJP1"/>
</dbReference>
<dbReference type="HPA" id="ENSG00000104067">
    <property type="expression patterns" value="Low tissue specificity"/>
</dbReference>
<dbReference type="MalaCards" id="TJP1"/>
<dbReference type="MIM" id="601009">
    <property type="type" value="gene"/>
</dbReference>
<dbReference type="neXtProt" id="NX_Q07157"/>
<dbReference type="OpenTargets" id="ENSG00000104067"/>
<dbReference type="PharmGKB" id="PA36532"/>
<dbReference type="VEuPathDB" id="HostDB:ENSG00000104067"/>
<dbReference type="eggNOG" id="KOG3580">
    <property type="taxonomic scope" value="Eukaryota"/>
</dbReference>
<dbReference type="GeneTree" id="ENSGT00940000155164"/>
<dbReference type="InParanoid" id="Q07157"/>
<dbReference type="OrthoDB" id="418634at2759"/>
<dbReference type="PAN-GO" id="Q07157">
    <property type="GO annotations" value="8 GO annotations based on evolutionary models"/>
</dbReference>
<dbReference type="PhylomeDB" id="Q07157"/>
<dbReference type="TreeFam" id="TF315957"/>
<dbReference type="PathwayCommons" id="Q07157"/>
<dbReference type="Reactome" id="R-HSA-191650">
    <property type="pathway name" value="Regulation of gap junction activity"/>
</dbReference>
<dbReference type="Reactome" id="R-HSA-2028269">
    <property type="pathway name" value="Signaling by Hippo"/>
</dbReference>
<dbReference type="Reactome" id="R-HSA-351906">
    <property type="pathway name" value="Apoptotic cleavage of cell adhesion proteins"/>
</dbReference>
<dbReference type="Reactome" id="R-HSA-8935964">
    <property type="pathway name" value="RUNX1 regulates expression of components of tight junctions"/>
</dbReference>
<dbReference type="Reactome" id="R-HSA-9705677">
    <property type="pathway name" value="SARS-CoV-2 targets PDZ proteins in cell-cell junction"/>
</dbReference>
<dbReference type="SignaLink" id="Q07157"/>
<dbReference type="SIGNOR" id="Q07157"/>
<dbReference type="BioGRID-ORCS" id="7082">
    <property type="hits" value="19 hits in 1164 CRISPR screens"/>
</dbReference>
<dbReference type="CD-CODE" id="CCFFAF5A">
    <property type="entry name" value="Junctional condensate"/>
</dbReference>
<dbReference type="CD-CODE" id="FB4E32DD">
    <property type="entry name" value="Presynaptic clusters and postsynaptic densities"/>
</dbReference>
<dbReference type="ChiTaRS" id="TJP1">
    <property type="organism name" value="human"/>
</dbReference>
<dbReference type="EvolutionaryTrace" id="Q07157"/>
<dbReference type="GeneWiki" id="Tight_junction_protein_1"/>
<dbReference type="GenomeRNAi" id="7082"/>
<dbReference type="Pharos" id="Q07157">
    <property type="development level" value="Tbio"/>
</dbReference>
<dbReference type="PRO" id="PR:Q07157"/>
<dbReference type="Proteomes" id="UP000005640">
    <property type="component" value="Chromosome 15"/>
</dbReference>
<dbReference type="RNAct" id="Q07157">
    <property type="molecule type" value="protein"/>
</dbReference>
<dbReference type="Bgee" id="ENSG00000104067">
    <property type="expression patterns" value="Expressed in corpus callosum and 96 other cell types or tissues"/>
</dbReference>
<dbReference type="ExpressionAtlas" id="Q07157">
    <property type="expression patterns" value="baseline and differential"/>
</dbReference>
<dbReference type="GO" id="GO:0005912">
    <property type="term" value="C:adherens junction"/>
    <property type="evidence" value="ECO:0000304"/>
    <property type="project" value="ProtInc"/>
</dbReference>
<dbReference type="GO" id="GO:0043296">
    <property type="term" value="C:apical junction complex"/>
    <property type="evidence" value="ECO:0000314"/>
    <property type="project" value="MGI"/>
</dbReference>
<dbReference type="GO" id="GO:0045177">
    <property type="term" value="C:apical part of cell"/>
    <property type="evidence" value="ECO:0000314"/>
    <property type="project" value="MGI"/>
</dbReference>
<dbReference type="GO" id="GO:0016323">
    <property type="term" value="C:basolateral plasma membrane"/>
    <property type="evidence" value="ECO:0000314"/>
    <property type="project" value="MGI"/>
</dbReference>
<dbReference type="GO" id="GO:0005923">
    <property type="term" value="C:bicellular tight junction"/>
    <property type="evidence" value="ECO:0000314"/>
    <property type="project" value="UniProtKB"/>
</dbReference>
<dbReference type="GO" id="GO:0030054">
    <property type="term" value="C:cell junction"/>
    <property type="evidence" value="ECO:0000314"/>
    <property type="project" value="HPA"/>
</dbReference>
<dbReference type="GO" id="GO:0042995">
    <property type="term" value="C:cell projection"/>
    <property type="evidence" value="ECO:0007669"/>
    <property type="project" value="UniProtKB-KW"/>
</dbReference>
<dbReference type="GO" id="GO:0005737">
    <property type="term" value="C:cytoplasm"/>
    <property type="evidence" value="ECO:0000314"/>
    <property type="project" value="UniProtKB"/>
</dbReference>
<dbReference type="GO" id="GO:0005829">
    <property type="term" value="C:cytosol"/>
    <property type="evidence" value="ECO:0000314"/>
    <property type="project" value="HPA"/>
</dbReference>
<dbReference type="GO" id="GO:0005921">
    <property type="term" value="C:gap junction"/>
    <property type="evidence" value="ECO:0000250"/>
    <property type="project" value="UniProtKB"/>
</dbReference>
<dbReference type="GO" id="GO:0005886">
    <property type="term" value="C:plasma membrane"/>
    <property type="evidence" value="ECO:0000314"/>
    <property type="project" value="ARUK-UCL"/>
</dbReference>
<dbReference type="GO" id="GO:0002102">
    <property type="term" value="C:podosome"/>
    <property type="evidence" value="ECO:0007669"/>
    <property type="project" value="UniProtKB-SubCell"/>
</dbReference>
<dbReference type="GO" id="GO:0032991">
    <property type="term" value="C:protein-containing complex"/>
    <property type="evidence" value="ECO:0000314"/>
    <property type="project" value="ARUK-UCL"/>
</dbReference>
<dbReference type="GO" id="GO:0070160">
    <property type="term" value="C:tight junction"/>
    <property type="evidence" value="ECO:0000314"/>
    <property type="project" value="ARUK-UCL"/>
</dbReference>
<dbReference type="GO" id="GO:0045296">
    <property type="term" value="F:cadherin binding"/>
    <property type="evidence" value="ECO:0007005"/>
    <property type="project" value="BHF-UCL"/>
</dbReference>
<dbReference type="GO" id="GO:0005516">
    <property type="term" value="F:calmodulin binding"/>
    <property type="evidence" value="ECO:0007669"/>
    <property type="project" value="UniProtKB-KW"/>
</dbReference>
<dbReference type="GO" id="GO:0050839">
    <property type="term" value="F:cell adhesion molecule binding"/>
    <property type="evidence" value="ECO:0000318"/>
    <property type="project" value="GO_Central"/>
</dbReference>
<dbReference type="GO" id="GO:0030036">
    <property type="term" value="P:actin cytoskeleton organization"/>
    <property type="evidence" value="ECO:0000315"/>
    <property type="project" value="ARUK-UCL"/>
</dbReference>
<dbReference type="GO" id="GO:0031032">
    <property type="term" value="P:actomyosin structure organization"/>
    <property type="evidence" value="ECO:0000315"/>
    <property type="project" value="ARUK-UCL"/>
</dbReference>
<dbReference type="GO" id="GO:0034334">
    <property type="term" value="P:adherens junction maintenance"/>
    <property type="evidence" value="ECO:0000315"/>
    <property type="project" value="ARUK-UCL"/>
</dbReference>
<dbReference type="GO" id="GO:0036305">
    <property type="term" value="P:ameloblast differentiation"/>
    <property type="evidence" value="ECO:0000250"/>
    <property type="project" value="UniProtKB"/>
</dbReference>
<dbReference type="GO" id="GO:0098609">
    <property type="term" value="P:cell-cell adhesion"/>
    <property type="evidence" value="ECO:0000318"/>
    <property type="project" value="GO_Central"/>
</dbReference>
<dbReference type="GO" id="GO:0007043">
    <property type="term" value="P:cell-cell junction assembly"/>
    <property type="evidence" value="ECO:0000304"/>
    <property type="project" value="ProtInc"/>
</dbReference>
<dbReference type="GO" id="GO:0045216">
    <property type="term" value="P:cell-cell junction organization"/>
    <property type="evidence" value="ECO:0000315"/>
    <property type="project" value="ARUK-UCL"/>
</dbReference>
<dbReference type="GO" id="GO:0090557">
    <property type="term" value="P:establishment of endothelial intestinal barrier"/>
    <property type="evidence" value="ECO:0000315"/>
    <property type="project" value="UniProtKB"/>
</dbReference>
<dbReference type="GO" id="GO:0035633">
    <property type="term" value="P:maintenance of blood-brain barrier"/>
    <property type="evidence" value="ECO:0000303"/>
    <property type="project" value="ARUK-UCL"/>
</dbReference>
<dbReference type="GO" id="GO:0043066">
    <property type="term" value="P:negative regulation of apoptotic process"/>
    <property type="evidence" value="ECO:0000315"/>
    <property type="project" value="ARUK-UCL"/>
</dbReference>
<dbReference type="GO" id="GO:0051497">
    <property type="term" value="P:negative regulation of stress fiber assembly"/>
    <property type="evidence" value="ECO:0000250"/>
    <property type="project" value="ARUK-UCL"/>
</dbReference>
<dbReference type="GO" id="GO:1905605">
    <property type="term" value="P:positive regulation of blood-brain barrier permeability"/>
    <property type="evidence" value="ECO:0000315"/>
    <property type="project" value="ARUK-UCL"/>
</dbReference>
<dbReference type="GO" id="GO:0030335">
    <property type="term" value="P:positive regulation of cell migration"/>
    <property type="evidence" value="ECO:0000315"/>
    <property type="project" value="ARUK-UCL"/>
</dbReference>
<dbReference type="GO" id="GO:0008284">
    <property type="term" value="P:positive regulation of cell population proliferation"/>
    <property type="evidence" value="ECO:0000315"/>
    <property type="project" value="ARUK-UCL"/>
</dbReference>
<dbReference type="GO" id="GO:2000049">
    <property type="term" value="P:positive regulation of cell-cell adhesion mediated by cadherin"/>
    <property type="evidence" value="ECO:0000315"/>
    <property type="project" value="ARUK-UCL"/>
</dbReference>
<dbReference type="GO" id="GO:1903672">
    <property type="term" value="P:positive regulation of sprouting angiogenesis"/>
    <property type="evidence" value="ECO:0000315"/>
    <property type="project" value="ARUK-UCL"/>
</dbReference>
<dbReference type="GO" id="GO:0071896">
    <property type="term" value="P:protein localization to adherens junction"/>
    <property type="evidence" value="ECO:0000315"/>
    <property type="project" value="ARUK-UCL"/>
</dbReference>
<dbReference type="GO" id="GO:1902396">
    <property type="term" value="P:protein localization to bicellular tight junction"/>
    <property type="evidence" value="ECO:0000315"/>
    <property type="project" value="ARUK-UCL"/>
</dbReference>
<dbReference type="GO" id="GO:0150105">
    <property type="term" value="P:protein localization to cell-cell junction"/>
    <property type="evidence" value="ECO:0000315"/>
    <property type="project" value="ARUK-UCL"/>
</dbReference>
<dbReference type="GO" id="GO:2000810">
    <property type="term" value="P:regulation of bicellular tight junction assembly"/>
    <property type="evidence" value="ECO:0000315"/>
    <property type="project" value="ARUK-UCL"/>
</dbReference>
<dbReference type="GO" id="GO:1901888">
    <property type="term" value="P:regulation of cell junction assembly"/>
    <property type="evidence" value="ECO:0000315"/>
    <property type="project" value="ARUK-UCL"/>
</dbReference>
<dbReference type="GO" id="GO:0051493">
    <property type="term" value="P:regulation of cytoskeleton organization"/>
    <property type="evidence" value="ECO:0000315"/>
    <property type="project" value="ARUK-UCL"/>
</dbReference>
<dbReference type="CDD" id="cd06727">
    <property type="entry name" value="PDZ1_ZO1-like"/>
    <property type="match status" value="1"/>
</dbReference>
<dbReference type="CDD" id="cd06728">
    <property type="entry name" value="PDZ2_ZO1-like_ds"/>
    <property type="match status" value="1"/>
</dbReference>
<dbReference type="CDD" id="cd06729">
    <property type="entry name" value="PDZ3_ZO1-like_domain"/>
    <property type="match status" value="1"/>
</dbReference>
<dbReference type="CDD" id="cd12026">
    <property type="entry name" value="SH3_ZO-1"/>
    <property type="match status" value="1"/>
</dbReference>
<dbReference type="DisProt" id="DP02818"/>
<dbReference type="FunFam" id="2.30.42.10:FF:000009">
    <property type="entry name" value="Putative tight junction protein ZO-1"/>
    <property type="match status" value="1"/>
</dbReference>
<dbReference type="FunFam" id="2.30.42.10:FF:000013">
    <property type="entry name" value="Putative tight junction protein ZO-1"/>
    <property type="match status" value="1"/>
</dbReference>
<dbReference type="FunFam" id="2.60.220.30:FF:000004">
    <property type="entry name" value="tight junction protein ZO-1 isoform X1"/>
    <property type="match status" value="1"/>
</dbReference>
<dbReference type="FunFam" id="3.40.50.300:FF:000110">
    <property type="entry name" value="tight junction protein ZO-1 isoform X1"/>
    <property type="match status" value="1"/>
</dbReference>
<dbReference type="FunFam" id="2.30.42.10:FF:000170">
    <property type="entry name" value="tight junction protein ZO-1 isoform X2"/>
    <property type="match status" value="1"/>
</dbReference>
<dbReference type="Gene3D" id="2.30.42.10">
    <property type="match status" value="3"/>
</dbReference>
<dbReference type="Gene3D" id="2.60.220.30">
    <property type="match status" value="1"/>
</dbReference>
<dbReference type="Gene3D" id="3.40.50.300">
    <property type="entry name" value="P-loop containing nucleotide triphosphate hydrolases"/>
    <property type="match status" value="1"/>
</dbReference>
<dbReference type="Gene3D" id="2.30.30.40">
    <property type="entry name" value="SH3 Domains"/>
    <property type="match status" value="1"/>
</dbReference>
<dbReference type="InterPro" id="IPR008145">
    <property type="entry name" value="GK/Ca_channel_bsu"/>
</dbReference>
<dbReference type="InterPro" id="IPR008144">
    <property type="entry name" value="Guanylate_kin-like_dom"/>
</dbReference>
<dbReference type="InterPro" id="IPR027417">
    <property type="entry name" value="P-loop_NTPase"/>
</dbReference>
<dbReference type="InterPro" id="IPR001478">
    <property type="entry name" value="PDZ"/>
</dbReference>
<dbReference type="InterPro" id="IPR036034">
    <property type="entry name" value="PDZ_sf"/>
</dbReference>
<dbReference type="InterPro" id="IPR036028">
    <property type="entry name" value="SH3-like_dom_sf"/>
</dbReference>
<dbReference type="InterPro" id="IPR001452">
    <property type="entry name" value="SH3_domain"/>
</dbReference>
<dbReference type="InterPro" id="IPR005417">
    <property type="entry name" value="ZO"/>
</dbReference>
<dbReference type="InterPro" id="IPR005418">
    <property type="entry name" value="ZO-1"/>
</dbReference>
<dbReference type="InterPro" id="IPR035597">
    <property type="entry name" value="ZO-1_SH3"/>
</dbReference>
<dbReference type="InterPro" id="IPR000906">
    <property type="entry name" value="ZU5_dom"/>
</dbReference>
<dbReference type="PANTHER" id="PTHR13865">
    <property type="entry name" value="TIGHT JUNCTION PROTEIN"/>
    <property type="match status" value="1"/>
</dbReference>
<dbReference type="PANTHER" id="PTHR13865:SF25">
    <property type="entry name" value="TIGHT JUNCTION PROTEIN ZO-1"/>
    <property type="match status" value="1"/>
</dbReference>
<dbReference type="Pfam" id="PF00625">
    <property type="entry name" value="Guanylate_kin"/>
    <property type="match status" value="1"/>
</dbReference>
<dbReference type="Pfam" id="PF00595">
    <property type="entry name" value="PDZ"/>
    <property type="match status" value="3"/>
</dbReference>
<dbReference type="Pfam" id="PF07653">
    <property type="entry name" value="SH3_2"/>
    <property type="match status" value="1"/>
</dbReference>
<dbReference type="Pfam" id="PF00791">
    <property type="entry name" value="ZU5"/>
    <property type="match status" value="1"/>
</dbReference>
<dbReference type="PRINTS" id="PR01597">
    <property type="entry name" value="ZONOCCLUDNS"/>
</dbReference>
<dbReference type="PRINTS" id="PR01598">
    <property type="entry name" value="ZONOCCLUDNS1"/>
</dbReference>
<dbReference type="SMART" id="SM00072">
    <property type="entry name" value="GuKc"/>
    <property type="match status" value="1"/>
</dbReference>
<dbReference type="SMART" id="SM00228">
    <property type="entry name" value="PDZ"/>
    <property type="match status" value="3"/>
</dbReference>
<dbReference type="SMART" id="SM00218">
    <property type="entry name" value="ZU5"/>
    <property type="match status" value="1"/>
</dbReference>
<dbReference type="SUPFAM" id="SSF52540">
    <property type="entry name" value="P-loop containing nucleoside triphosphate hydrolases"/>
    <property type="match status" value="1"/>
</dbReference>
<dbReference type="SUPFAM" id="SSF50156">
    <property type="entry name" value="PDZ domain-like"/>
    <property type="match status" value="3"/>
</dbReference>
<dbReference type="SUPFAM" id="SSF50044">
    <property type="entry name" value="SH3-domain"/>
    <property type="match status" value="1"/>
</dbReference>
<dbReference type="PROSITE" id="PS50052">
    <property type="entry name" value="GUANYLATE_KINASE_2"/>
    <property type="match status" value="1"/>
</dbReference>
<dbReference type="PROSITE" id="PS50106">
    <property type="entry name" value="PDZ"/>
    <property type="match status" value="3"/>
</dbReference>
<dbReference type="PROSITE" id="PS50002">
    <property type="entry name" value="SH3"/>
    <property type="match status" value="1"/>
</dbReference>
<dbReference type="PROSITE" id="PS51145">
    <property type="entry name" value="ZU5"/>
    <property type="match status" value="1"/>
</dbReference>
<comment type="function">
    <text evidence="2 3 24 25">TJP1, TJP2, and TJP3 are closely related scaffolding proteins that link tight junction (TJ) transmembrane proteins such as claudins, junctional adhesion molecules, and occludin to the actin cytoskeleton (PubMed:7798316, PubMed:9792688). Forms a multistranded TJP1/ZO1 condensate which elongates to form a tight junction belt, the belt is anchored at the apical cell membrane via interaction with PATJ (By similarity). The tight junction acts to limit movement of substances through the paracellular space and as a boundary between the compositionally distinct apical and basolateral plasma membrane domains of epithelial and endothelial cells. Necessary for lumenogenesis, and particularly efficient epithelial polarization and barrier formation (By similarity). Plays a role in the regulation of cell migration by targeting CDC42BPB to the leading edge of migrating cells (PubMed:21240187). Plays an important role in podosome formation and associated function, thus regulating cell adhesion and matrix remodeling (PubMed:20930113). With TJP2 and TJP3, participates in the junctional retention and stability of the transcription factor DBPA, but is not involved in its shuttling to the nucleus (By similarity). May play a role in mediating cell morphology changes during ameloblast differentiation via its role in tight junctions (By similarity).</text>
</comment>
<comment type="subunit">
    <text evidence="2 3 9 10 11 12 14 15 16 17 18 19 20 22 23 24 25 26 28 32">Homodimer (PubMed:16737969, PubMed:17928286). Forms heterodimers TJP3 (By similarity). Forms a heterodimer (via PDZ2 domain) with TJP2/ZO2 (via PDZ2 domain) (PubMed:17897942, PubMed:9792688). Interacts with OCLN, CALM, claudins, CGN/cingulin, CXADR, GJA12, GJD3 and UBN1 (PubMed:11734628, PubMed:12023291, PubMed:12154091, PubMed:15183511, PubMed:18823282, PubMed:20200156, PubMed:7798316). Interacts (via ZU5 domain) with CDC42BPB and MYZAP (PubMed:20093627, PubMed:21240187). Interacts (via PDZ domain) with GJA1 (PubMed:18636092). Interacts (via PDZ domains) with ANKRD2 (PubMed:22016770). Interacts with POPDC1 (via the C-terminus cytoplasmic tail) (By similarity). Interacts with HSPA4 and KIRREL1 (By similarity). Interacts with DLL1 (By similarity). Interacts with USP53 (via the C-terminal region) (By similarity). Interacts (via ABR region) with F-actin (PubMed:12354695, PubMed:20930113, PubMed:9792688). Interacts with DNMBP (via C-terminal domain); required for the apical cell-cell junction localization of DNMBP (PubMed:17015620). Interacts with SPEF1 (PubMed:31473225). Interacts (via N-terminus) with CTNNA1 (By similarity). Interacts with CLDN18 (By similarity). Interacts with CLDN16 (via TRV motif); this is a prerequisite for anchoring of CLDN16 at the tight junction. Interacts with PKP1; the interaction facilitates TJP1/ZO-1 localization to the plasma membrane (By similarity). Interacts with PATJ (via PDZ1-6 domains); the interaction is required for attachment and extension of TJP1/ZO1 condensates along the apical cell interface (By similarity).</text>
</comment>
<comment type="interaction">
    <interactant intactId="EBI-79553">
        <id>Q07157</id>
    </interactant>
    <interactant intactId="EBI-351526">
        <id>O43707</id>
        <label>ACTN4</label>
    </interactant>
    <organismsDiffer>false</organismsDiffer>
    <experiments>4</experiments>
</comment>
<comment type="interaction">
    <interactant intactId="EBI-79553">
        <id>Q07157</id>
    </interactant>
    <interactant intactId="EBI-79537">
        <id>Q9P2M7</id>
        <label>CGN</label>
    </interactant>
    <organismsDiffer>false</organismsDiffer>
    <experiments>2</experiments>
</comment>
<comment type="interaction">
    <interactant intactId="EBI-79553">
        <id>Q07157</id>
    </interactant>
    <interactant intactId="EBI-1103439">
        <id>P17302</id>
        <label>GJA1</label>
    </interactant>
    <organismsDiffer>false</organismsDiffer>
    <experiments>3</experiments>
</comment>
<comment type="interaction">
    <interactant intactId="EBI-79553">
        <id>Q07157</id>
    </interactant>
    <interactant intactId="EBI-2629520">
        <id>Q8N144</id>
        <label>GJD3</label>
    </interactant>
    <organismsDiffer>false</organismsDiffer>
    <experiments>2</experiments>
</comment>
<comment type="interaction">
    <interactant intactId="EBI-79553">
        <id>Q07157</id>
    </interactant>
    <interactant intactId="EBI-3988456">
        <id>Q96J84</id>
        <label>KIRREL1</label>
    </interactant>
    <organismsDiffer>false</organismsDiffer>
    <experiments>7</experiments>
</comment>
<comment type="interaction">
    <interactant intactId="EBI-79553">
        <id>Q07157</id>
    </interactant>
    <interactant intactId="EBI-1211920">
        <id>Q9EPK5</id>
        <label>Wwtr1</label>
    </interactant>
    <organismsDiffer>true</organismsDiffer>
    <experiments>4</experiments>
</comment>
<comment type="subcellular location">
    <subcellularLocation>
        <location evidence="30">Cell membrane</location>
        <topology evidence="30">Peripheral membrane protein</topology>
        <orientation evidence="30">Cytoplasmic side</orientation>
    </subcellularLocation>
    <subcellularLocation>
        <location evidence="30">Cell junction</location>
        <location evidence="30">Tight junction</location>
    </subcellularLocation>
    <subcellularLocation>
        <location evidence="27">Cell junction</location>
    </subcellularLocation>
    <subcellularLocation>
        <location>Cell junction</location>
        <location>Gap junction</location>
    </subcellularLocation>
    <subcellularLocation>
        <location evidence="24">Cell projection</location>
        <location evidence="24">Podosome</location>
    </subcellularLocation>
    <text evidence="2 24 28 30">Moves from the cytoplasm to the cell membrane concurrently with cell-cell contact (PubMed:7798316). Forms a condensed tight junction-linked belt of protein during junction formation which becomes anchored to the apical cell membrane via interaction with PATJ (By similarity). At podosomal sites, is predominantly localized in the ring structure surrounding the actin core (PubMed:20930113). Colocalizes with SPEF1 at sites of cell-cell contact in intestinal epithelial cells (PubMed:31473225).</text>
</comment>
<comment type="alternative products">
    <event type="alternative splicing"/>
    <isoform>
        <id>Q07157-1</id>
        <name>Long</name>
        <sequence type="displayed"/>
    </isoform>
    <isoform>
        <id>Q07157-2</id>
        <name>Short</name>
        <sequence type="described" ref="VSP_003148"/>
    </isoform>
</comment>
<comment type="tissue specificity">
    <text>The alpha-containing isoform is found in most epithelial cell junctions. The short isoform is found both in endothelial cells and the highly specialized epithelial junctions of renal glomeruli and Sertoli cells of the seminiferous tubules.</text>
</comment>
<comment type="domain">
    <text evidence="32">The 244-aa domain between residues 633 and 876 is the primary occludin (OCLN)-binding site and is required for stable association with the tight junction (PubMed:9792688).</text>
</comment>
<comment type="domain">
    <text evidence="12 24 32">The C-terminal region (residues 1151-1372) is an actin-binding region (ABR) that interacts directly with F-actin and plays an important role in the localization of TJP1 at junctions (PubMed:12354695, PubMed:20930113, PubMed:9792688). The ABR is also required for the localization to puncta at the free edge of cells before initiation of cell-cell contact (PubMed:12354695). The ABR is also necessary for TJP1 recruitment to podosomes (PubMed:20930113).</text>
</comment>
<comment type="domain">
    <text evidence="18 32">The second PDZ domain (PDZ2) mediates homodimerization and heterodimerization with TJP2 and TJP3 (PubMed:17928286, PubMed:9792688).</text>
</comment>
<comment type="PTM">
    <text evidence="21 29">Phosphorylated at tyrosine redidues in response to epidermal growth factor (EGF) (PubMed:19332538, PubMed:7542259). This response is dependent on an intact actin microfilament system (PubMed:7542259). Dephosphorylated by PTPRJ (PubMed:19332538).</text>
</comment>
<comment type="similarity">
    <text evidence="35">Belongs to the MAGUK family.</text>
</comment>
<comment type="sequence caution" evidence="35">
    <conflict type="erroneous initiation">
        <sequence resource="EMBL-CDS" id="AAA02891"/>
    </conflict>
    <text>Truncated N-terminus.</text>
</comment>
<gene>
    <name evidence="36" type="primary">TJP1</name>
    <name evidence="34" type="synonym">ZO1</name>
</gene>
<keyword id="KW-0002">3D-structure</keyword>
<keyword id="KW-0025">Alternative splicing</keyword>
<keyword id="KW-0112">Calmodulin-binding</keyword>
<keyword id="KW-0965">Cell junction</keyword>
<keyword id="KW-1003">Cell membrane</keyword>
<keyword id="KW-0966">Cell projection</keyword>
<keyword id="KW-0303">Gap junction</keyword>
<keyword id="KW-0472">Membrane</keyword>
<keyword id="KW-0597">Phosphoprotein</keyword>
<keyword id="KW-1267">Proteomics identification</keyword>
<keyword id="KW-1185">Reference proteome</keyword>
<keyword id="KW-0677">Repeat</keyword>
<keyword id="KW-0728">SH3 domain</keyword>
<keyword id="KW-0796">Tight junction</keyword>
<name>ZO1_HUMAN</name>